<reference key="1">
    <citation type="journal article" date="2004" name="Nat. Genet.">
        <title>Complete sequencing and characterization of 21,243 full-length human cDNAs.</title>
        <authorList>
            <person name="Ota T."/>
            <person name="Suzuki Y."/>
            <person name="Nishikawa T."/>
            <person name="Otsuki T."/>
            <person name="Sugiyama T."/>
            <person name="Irie R."/>
            <person name="Wakamatsu A."/>
            <person name="Hayashi K."/>
            <person name="Sato H."/>
            <person name="Nagai K."/>
            <person name="Kimura K."/>
            <person name="Makita H."/>
            <person name="Sekine M."/>
            <person name="Obayashi M."/>
            <person name="Nishi T."/>
            <person name="Shibahara T."/>
            <person name="Tanaka T."/>
            <person name="Ishii S."/>
            <person name="Yamamoto J."/>
            <person name="Saito K."/>
            <person name="Kawai Y."/>
            <person name="Isono Y."/>
            <person name="Nakamura Y."/>
            <person name="Nagahari K."/>
            <person name="Murakami K."/>
            <person name="Yasuda T."/>
            <person name="Iwayanagi T."/>
            <person name="Wagatsuma M."/>
            <person name="Shiratori A."/>
            <person name="Sudo H."/>
            <person name="Hosoiri T."/>
            <person name="Kaku Y."/>
            <person name="Kodaira H."/>
            <person name="Kondo H."/>
            <person name="Sugawara M."/>
            <person name="Takahashi M."/>
            <person name="Kanda K."/>
            <person name="Yokoi T."/>
            <person name="Furuya T."/>
            <person name="Kikkawa E."/>
            <person name="Omura Y."/>
            <person name="Abe K."/>
            <person name="Kamihara K."/>
            <person name="Katsuta N."/>
            <person name="Sato K."/>
            <person name="Tanikawa M."/>
            <person name="Yamazaki M."/>
            <person name="Ninomiya K."/>
            <person name="Ishibashi T."/>
            <person name="Yamashita H."/>
            <person name="Murakawa K."/>
            <person name="Fujimori K."/>
            <person name="Tanai H."/>
            <person name="Kimata M."/>
            <person name="Watanabe M."/>
            <person name="Hiraoka S."/>
            <person name="Chiba Y."/>
            <person name="Ishida S."/>
            <person name="Ono Y."/>
            <person name="Takiguchi S."/>
            <person name="Watanabe S."/>
            <person name="Yosida M."/>
            <person name="Hotuta T."/>
            <person name="Kusano J."/>
            <person name="Kanehori K."/>
            <person name="Takahashi-Fujii A."/>
            <person name="Hara H."/>
            <person name="Tanase T.-O."/>
            <person name="Nomura Y."/>
            <person name="Togiya S."/>
            <person name="Komai F."/>
            <person name="Hara R."/>
            <person name="Takeuchi K."/>
            <person name="Arita M."/>
            <person name="Imose N."/>
            <person name="Musashino K."/>
            <person name="Yuuki H."/>
            <person name="Oshima A."/>
            <person name="Sasaki N."/>
            <person name="Aotsuka S."/>
            <person name="Yoshikawa Y."/>
            <person name="Matsunawa H."/>
            <person name="Ichihara T."/>
            <person name="Shiohata N."/>
            <person name="Sano S."/>
            <person name="Moriya S."/>
            <person name="Momiyama H."/>
            <person name="Satoh N."/>
            <person name="Takami S."/>
            <person name="Terashima Y."/>
            <person name="Suzuki O."/>
            <person name="Nakagawa S."/>
            <person name="Senoh A."/>
            <person name="Mizoguchi H."/>
            <person name="Goto Y."/>
            <person name="Shimizu F."/>
            <person name="Wakebe H."/>
            <person name="Hishigaki H."/>
            <person name="Watanabe T."/>
            <person name="Sugiyama A."/>
            <person name="Takemoto M."/>
            <person name="Kawakami B."/>
            <person name="Yamazaki M."/>
            <person name="Watanabe K."/>
            <person name="Kumagai A."/>
            <person name="Itakura S."/>
            <person name="Fukuzumi Y."/>
            <person name="Fujimori Y."/>
            <person name="Komiyama M."/>
            <person name="Tashiro H."/>
            <person name="Tanigami A."/>
            <person name="Fujiwara T."/>
            <person name="Ono T."/>
            <person name="Yamada K."/>
            <person name="Fujii Y."/>
            <person name="Ozaki K."/>
            <person name="Hirao M."/>
            <person name="Ohmori Y."/>
            <person name="Kawabata A."/>
            <person name="Hikiji T."/>
            <person name="Kobatake N."/>
            <person name="Inagaki H."/>
            <person name="Ikema Y."/>
            <person name="Okamoto S."/>
            <person name="Okitani R."/>
            <person name="Kawakami T."/>
            <person name="Noguchi S."/>
            <person name="Itoh T."/>
            <person name="Shigeta K."/>
            <person name="Senba T."/>
            <person name="Matsumura K."/>
            <person name="Nakajima Y."/>
            <person name="Mizuno T."/>
            <person name="Morinaga M."/>
            <person name="Sasaki M."/>
            <person name="Togashi T."/>
            <person name="Oyama M."/>
            <person name="Hata H."/>
            <person name="Watanabe M."/>
            <person name="Komatsu T."/>
            <person name="Mizushima-Sugano J."/>
            <person name="Satoh T."/>
            <person name="Shirai Y."/>
            <person name="Takahashi Y."/>
            <person name="Nakagawa K."/>
            <person name="Okumura K."/>
            <person name="Nagase T."/>
            <person name="Nomura N."/>
            <person name="Kikuchi H."/>
            <person name="Masuho Y."/>
            <person name="Yamashita R."/>
            <person name="Nakai K."/>
            <person name="Yada T."/>
            <person name="Nakamura Y."/>
            <person name="Ohara O."/>
            <person name="Isogai T."/>
            <person name="Sugano S."/>
        </authorList>
    </citation>
    <scope>NUCLEOTIDE SEQUENCE [LARGE SCALE MRNA] (ISOFORMS 1; 4 AND 5)</scope>
    <scope>NUCLEOTIDE SEQUENCE [LARGE SCALE MRNA] OF 159-476 (ISOFORM 2)</scope>
    <source>
        <tissue>Kidney</tissue>
        <tissue>Ovary</tissue>
        <tissue>Thalamus</tissue>
    </source>
</reference>
<reference key="2">
    <citation type="journal article" date="2001" name="Genome Res.">
        <title>Towards a catalog of human genes and proteins: sequencing and analysis of 500 novel complete protein coding human cDNAs.</title>
        <authorList>
            <person name="Wiemann S."/>
            <person name="Weil B."/>
            <person name="Wellenreuther R."/>
            <person name="Gassenhuber J."/>
            <person name="Glassl S."/>
            <person name="Ansorge W."/>
            <person name="Boecher M."/>
            <person name="Bloecker H."/>
            <person name="Bauersachs S."/>
            <person name="Blum H."/>
            <person name="Lauber J."/>
            <person name="Duesterhoeft A."/>
            <person name="Beyer A."/>
            <person name="Koehrer K."/>
            <person name="Strack N."/>
            <person name="Mewes H.-W."/>
            <person name="Ottenwaelder B."/>
            <person name="Obermaier B."/>
            <person name="Tampe J."/>
            <person name="Heubner D."/>
            <person name="Wambutt R."/>
            <person name="Korn B."/>
            <person name="Klein M."/>
            <person name="Poustka A."/>
        </authorList>
    </citation>
    <scope>NUCLEOTIDE SEQUENCE [LARGE SCALE MRNA] (ISOFORM 3)</scope>
    <source>
        <tissue>Brain</tissue>
    </source>
</reference>
<reference key="3">
    <citation type="journal article" date="2004" name="Nature">
        <title>The DNA sequence and comparative analysis of human chromosome 10.</title>
        <authorList>
            <person name="Deloukas P."/>
            <person name="Earthrowl M.E."/>
            <person name="Grafham D.V."/>
            <person name="Rubenfield M."/>
            <person name="French L."/>
            <person name="Steward C.A."/>
            <person name="Sims S.K."/>
            <person name="Jones M.C."/>
            <person name="Searle S."/>
            <person name="Scott C."/>
            <person name="Howe K."/>
            <person name="Hunt S.E."/>
            <person name="Andrews T.D."/>
            <person name="Gilbert J.G.R."/>
            <person name="Swarbreck D."/>
            <person name="Ashurst J.L."/>
            <person name="Taylor A."/>
            <person name="Battles J."/>
            <person name="Bird C.P."/>
            <person name="Ainscough R."/>
            <person name="Almeida J.P."/>
            <person name="Ashwell R.I.S."/>
            <person name="Ambrose K.D."/>
            <person name="Babbage A.K."/>
            <person name="Bagguley C.L."/>
            <person name="Bailey J."/>
            <person name="Banerjee R."/>
            <person name="Bates K."/>
            <person name="Beasley H."/>
            <person name="Bray-Allen S."/>
            <person name="Brown A.J."/>
            <person name="Brown J.Y."/>
            <person name="Burford D.C."/>
            <person name="Burrill W."/>
            <person name="Burton J."/>
            <person name="Cahill P."/>
            <person name="Camire D."/>
            <person name="Carter N.P."/>
            <person name="Chapman J.C."/>
            <person name="Clark S.Y."/>
            <person name="Clarke G."/>
            <person name="Clee C.M."/>
            <person name="Clegg S."/>
            <person name="Corby N."/>
            <person name="Coulson A."/>
            <person name="Dhami P."/>
            <person name="Dutta I."/>
            <person name="Dunn M."/>
            <person name="Faulkner L."/>
            <person name="Frankish A."/>
            <person name="Frankland J.A."/>
            <person name="Garner P."/>
            <person name="Garnett J."/>
            <person name="Gribble S."/>
            <person name="Griffiths C."/>
            <person name="Grocock R."/>
            <person name="Gustafson E."/>
            <person name="Hammond S."/>
            <person name="Harley J.L."/>
            <person name="Hart E."/>
            <person name="Heath P.D."/>
            <person name="Ho T.P."/>
            <person name="Hopkins B."/>
            <person name="Horne J."/>
            <person name="Howden P.J."/>
            <person name="Huckle E."/>
            <person name="Hynds C."/>
            <person name="Johnson C."/>
            <person name="Johnson D."/>
            <person name="Kana A."/>
            <person name="Kay M."/>
            <person name="Kimberley A.M."/>
            <person name="Kershaw J.K."/>
            <person name="Kokkinaki M."/>
            <person name="Laird G.K."/>
            <person name="Lawlor S."/>
            <person name="Lee H.M."/>
            <person name="Leongamornlert D.A."/>
            <person name="Laird G."/>
            <person name="Lloyd C."/>
            <person name="Lloyd D.M."/>
            <person name="Loveland J."/>
            <person name="Lovell J."/>
            <person name="McLaren S."/>
            <person name="McLay K.E."/>
            <person name="McMurray A."/>
            <person name="Mashreghi-Mohammadi M."/>
            <person name="Matthews L."/>
            <person name="Milne S."/>
            <person name="Nickerson T."/>
            <person name="Nguyen M."/>
            <person name="Overton-Larty E."/>
            <person name="Palmer S.A."/>
            <person name="Pearce A.V."/>
            <person name="Peck A.I."/>
            <person name="Pelan S."/>
            <person name="Phillimore B."/>
            <person name="Porter K."/>
            <person name="Rice C.M."/>
            <person name="Rogosin A."/>
            <person name="Ross M.T."/>
            <person name="Sarafidou T."/>
            <person name="Sehra H.K."/>
            <person name="Shownkeen R."/>
            <person name="Skuce C.D."/>
            <person name="Smith M."/>
            <person name="Standring L."/>
            <person name="Sycamore N."/>
            <person name="Tester J."/>
            <person name="Thorpe A."/>
            <person name="Torcasso W."/>
            <person name="Tracey A."/>
            <person name="Tromans A."/>
            <person name="Tsolas J."/>
            <person name="Wall M."/>
            <person name="Walsh J."/>
            <person name="Wang H."/>
            <person name="Weinstock K."/>
            <person name="West A.P."/>
            <person name="Willey D.L."/>
            <person name="Whitehead S.L."/>
            <person name="Wilming L."/>
            <person name="Wray P.W."/>
            <person name="Young L."/>
            <person name="Chen Y."/>
            <person name="Lovering R.C."/>
            <person name="Moschonas N.K."/>
            <person name="Siebert R."/>
            <person name="Fechtel K."/>
            <person name="Bentley D."/>
            <person name="Durbin R.M."/>
            <person name="Hubbard T."/>
            <person name="Doucette-Stamm L."/>
            <person name="Beck S."/>
            <person name="Smith D.R."/>
            <person name="Rogers J."/>
        </authorList>
    </citation>
    <scope>NUCLEOTIDE SEQUENCE [LARGE SCALE GENOMIC DNA]</scope>
</reference>
<reference key="4">
    <citation type="submission" date="2005-07" db="EMBL/GenBank/DDBJ databases">
        <authorList>
            <person name="Mural R.J."/>
            <person name="Istrail S."/>
            <person name="Sutton G.G."/>
            <person name="Florea L."/>
            <person name="Halpern A.L."/>
            <person name="Mobarry C.M."/>
            <person name="Lippert R."/>
            <person name="Walenz B."/>
            <person name="Shatkay H."/>
            <person name="Dew I."/>
            <person name="Miller J.R."/>
            <person name="Flanigan M.J."/>
            <person name="Edwards N.J."/>
            <person name="Bolanos R."/>
            <person name="Fasulo D."/>
            <person name="Halldorsson B.V."/>
            <person name="Hannenhalli S."/>
            <person name="Turner R."/>
            <person name="Yooseph S."/>
            <person name="Lu F."/>
            <person name="Nusskern D.R."/>
            <person name="Shue B.C."/>
            <person name="Zheng X.H."/>
            <person name="Zhong F."/>
            <person name="Delcher A.L."/>
            <person name="Huson D.H."/>
            <person name="Kravitz S.A."/>
            <person name="Mouchard L."/>
            <person name="Reinert K."/>
            <person name="Remington K.A."/>
            <person name="Clark A.G."/>
            <person name="Waterman M.S."/>
            <person name="Eichler E.E."/>
            <person name="Adams M.D."/>
            <person name="Hunkapiller M.W."/>
            <person name="Myers E.W."/>
            <person name="Venter J.C."/>
        </authorList>
    </citation>
    <scope>NUCLEOTIDE SEQUENCE [LARGE SCALE GENOMIC DNA]</scope>
</reference>
<reference key="5">
    <citation type="journal article" date="2004" name="Genome Res.">
        <title>The status, quality, and expansion of the NIH full-length cDNA project: the Mammalian Gene Collection (MGC).</title>
        <authorList>
            <consortium name="The MGC Project Team"/>
        </authorList>
    </citation>
    <scope>NUCLEOTIDE SEQUENCE [LARGE SCALE MRNA] (ISOFORM 1)</scope>
    <source>
        <tissue>Muscle</tissue>
        <tissue>Skin</tissue>
    </source>
</reference>
<reference key="6">
    <citation type="journal article" date="1998" name="FASEB J.">
        <title>Isolation of cDNA clones coding for IgE autoantigens with serum IgE from atopic dermatitis patients.</title>
        <authorList>
            <person name="Natter S."/>
            <person name="Seiberler S."/>
            <person name="Hufnagl P."/>
            <person name="Binder B.R."/>
            <person name="Hirschl A.M."/>
            <person name="Ring J."/>
            <person name="Abeck D."/>
            <person name="Schmidt T."/>
            <person name="Valent P."/>
            <person name="Valenta R."/>
        </authorList>
    </citation>
    <scope>NUCLEOTIDE SEQUENCE [MRNA] OF 167-476 (ISOFORM 1)</scope>
    <scope>TISSUE SPECIFICITY</scope>
    <scope>ALLERGEN</scope>
</reference>
<reference key="7">
    <citation type="journal article" date="2005" name="J. Immunol.">
        <title>Hom s 4, an IgE-reactive autoantigen belonging to a new subfamily of calcium-binding proteins, can induce Th cell type 1-mediated autoreactivity.</title>
        <authorList>
            <person name="Aichberger K.J."/>
            <person name="Mittermann I."/>
            <person name="Reininger R."/>
            <person name="Seiberler S."/>
            <person name="Swoboda I."/>
            <person name="Spitzauer S."/>
            <person name="Kopp T."/>
            <person name="Stingl G."/>
            <person name="Sperr W.R."/>
            <person name="Valent P."/>
            <person name="Repa A."/>
            <person name="Bohle B."/>
            <person name="Kraft D."/>
            <person name="Valenta R."/>
        </authorList>
    </citation>
    <scope>FUNCTION</scope>
    <scope>TISSUE SPECIFICITY</scope>
</reference>
<reference key="8">
    <citation type="journal article" date="2010" name="Nature">
        <title>MICU1 encodes a mitochondrial EF hand protein required for Ca(2+) uptake.</title>
        <authorList>
            <person name="Perocchi F."/>
            <person name="Gohil V.M."/>
            <person name="Girgis H.S."/>
            <person name="Bao X.R."/>
            <person name="McCombs J.E."/>
            <person name="Palmer A.E."/>
            <person name="Mootha V.K."/>
        </authorList>
    </citation>
    <scope>FUNCTION</scope>
    <scope>MUTAGENESIS OF ASP-231; GLU-242; ASP-421 AND GLU-432</scope>
</reference>
<reference key="9">
    <citation type="journal article" date="2011" name="BMC Syst. Biol.">
        <title>Initial characterization of the human central proteome.</title>
        <authorList>
            <person name="Burkard T.R."/>
            <person name="Planyavsky M."/>
            <person name="Kaupe I."/>
            <person name="Breitwieser F.P."/>
            <person name="Buerckstuemmer T."/>
            <person name="Bennett K.L."/>
            <person name="Superti-Furga G."/>
            <person name="Colinge J."/>
        </authorList>
    </citation>
    <scope>IDENTIFICATION BY MASS SPECTROMETRY [LARGE SCALE ANALYSIS]</scope>
</reference>
<reference key="10">
    <citation type="journal article" date="2011" name="Nature">
        <title>Integrative genomics identifies MCU as an essential component of the mitochondrial calcium uniporter.</title>
        <authorList>
            <person name="Baughman J.M."/>
            <person name="Perocchi F."/>
            <person name="Girgis H.S."/>
            <person name="Plovanich M."/>
            <person name="Belcher-Timme C.A."/>
            <person name="Sancak Y."/>
            <person name="Bao X.R."/>
            <person name="Strittmatter L."/>
            <person name="Goldberger O."/>
            <person name="Bogorad R.L."/>
            <person name="Koteliansky V."/>
            <person name="Mootha V.K."/>
        </authorList>
    </citation>
    <scope>IDENTIFICATION IN THE UNIPLEX COMPLEX</scope>
</reference>
<reference key="11">
    <citation type="journal article" date="2012" name="Cell">
        <title>MICU1 is an essential gatekeeper for MCU-mediated mitochondrial Ca(2+) uptake that regulates cell survival.</title>
        <authorList>
            <person name="Mallilankaraman K."/>
            <person name="Doonan P."/>
            <person name="Cardenas C."/>
            <person name="Chandramoorthy H.C."/>
            <person name="Muller M."/>
            <person name="Miller R."/>
            <person name="Hoffman N.E."/>
            <person name="Gandhirajan R.K."/>
            <person name="Molgo J."/>
            <person name="Birnbaum M.J."/>
            <person name="Rothberg B.S."/>
            <person name="Mak D.O."/>
            <person name="Foskett J.K."/>
            <person name="Madesh M."/>
        </authorList>
    </citation>
    <scope>FUNCTION</scope>
    <scope>IDENTIFICATION IN THE UNIPLEX COMPLEX</scope>
    <scope>MUTAGENESIS OF ASP-231; GLU-242; ASP-421 AND GLU-432</scope>
</reference>
<reference key="12">
    <citation type="journal article" date="2012" name="J. Biol. Chem.">
        <title>Mitochondrial Ca2+ uptake 1 (MICU1) and mitochondrial ca2+ uniporter (MCU) contribute to metabolism-secretion coupling in clonal pancreatic beta-cells.</title>
        <authorList>
            <person name="Alam M.R."/>
            <person name="Groschner L.N."/>
            <person name="Parichatikanond W."/>
            <person name="Kuo L."/>
            <person name="Bondarenko A.I."/>
            <person name="Rost R."/>
            <person name="Waldeck-Weiermair M."/>
            <person name="Malli R."/>
            <person name="Graier W.F."/>
        </authorList>
    </citation>
    <scope>FUNCTION</scope>
</reference>
<reference key="13">
    <citation type="journal article" date="2012" name="Nat. Cell Biol.">
        <title>MCUR1 is an essential component of mitochondrial Ca(2+) uptake that regulates cellular metabolism.</title>
        <authorList>
            <person name="Mallilankaraman K."/>
            <person name="Cardenas C."/>
            <person name="Doonan P.J."/>
            <person name="Chandramoorthy H.C."/>
            <person name="Irrinki K.M."/>
            <person name="Golenar T."/>
            <person name="Csordas G."/>
            <person name="Madireddi P."/>
            <person name="Yang J."/>
            <person name="Muller M."/>
            <person name="Miller R."/>
            <person name="Kolesar J.E."/>
            <person name="Molgo J."/>
            <person name="Kaufman B."/>
            <person name="Hajnoczky G."/>
            <person name="Foskett J.K."/>
            <person name="Madesh M."/>
        </authorList>
    </citation>
    <scope>IDENTIFICATION IN THE UNIPLEX COMPLEX</scope>
</reference>
<reference key="14">
    <citation type="journal article" date="2013" name="Cell Metab.">
        <title>MICU1 controls both the threshold and cooperative activation of the mitochondrial Ca(2+) uniporter.</title>
        <authorList>
            <person name="Csordas G."/>
            <person name="Golenar T."/>
            <person name="Seifert E.L."/>
            <person name="Kamer K.J."/>
            <person name="Sancak Y."/>
            <person name="Perocchi F."/>
            <person name="Moffat C."/>
            <person name="Weaver D."/>
            <person name="de la Fuente Perez S."/>
            <person name="Bogorad R."/>
            <person name="Koteliansky V."/>
            <person name="Adijanto J."/>
            <person name="Mootha V.K."/>
            <person name="Hajnoczky G."/>
        </authorList>
    </citation>
    <scope>FUNCTION</scope>
    <scope>SUBCELLULAR LOCATION</scope>
</reference>
<reference key="15">
    <citation type="journal article" date="2013" name="Cell Rep.">
        <title>MICU1 motifs define mitochondrial calcium uniporter binding and activity.</title>
        <authorList>
            <person name="Hoffman N.E."/>
            <person name="Chandramoorthy H.C."/>
            <person name="Shamugapriya S."/>
            <person name="Zhang X."/>
            <person name="Rajan S."/>
            <person name="Mallilankaraman K."/>
            <person name="Gandhirajan R.K."/>
            <person name="Vagnozzi R.J."/>
            <person name="Ferrer L.M."/>
            <person name="Sreekrishnanilayam K."/>
            <person name="Natarajaseenivasan K."/>
            <person name="Vallem S."/>
            <person name="Force T."/>
            <person name="Choi E.T."/>
            <person name="Cheung J.Y."/>
            <person name="Madesh M."/>
        </authorList>
    </citation>
    <scope>FUNCTION</scope>
    <scope>IDENTIFICATION IN THE UNIPLEX COMPLEX</scope>
</reference>
<reference key="16">
    <citation type="journal article" date="2013" name="Science">
        <title>EMRE is an essential component of the mitochondrial calcium uniporter complex.</title>
        <authorList>
            <person name="Sancak Y."/>
            <person name="Markhard A.L."/>
            <person name="Kitami T."/>
            <person name="Kovacs-Bogdan E."/>
            <person name="Kamer K.J."/>
            <person name="Udeshi N.D."/>
            <person name="Carr S.A."/>
            <person name="Chaudhuri D."/>
            <person name="Clapham D.E."/>
            <person name="Li A.A."/>
            <person name="Calvo S.E."/>
            <person name="Goldberger O."/>
            <person name="Mootha V.K."/>
        </authorList>
    </citation>
    <scope>SUBCELLULAR LOCATION</scope>
    <scope>IDENTIFICATION IN THE UNIPLEX COMPLEX</scope>
</reference>
<reference key="17">
    <citation type="journal article" date="2014" name="Biochem. J.">
        <title>Dynamics of mitochondrial Ca2+ uptake in MICU1-knockdown cells.</title>
        <authorList>
            <person name="de la Fuente S."/>
            <person name="Matesanz-Isabel J."/>
            <person name="Fonteriz R.I."/>
            <person name="Montero M."/>
            <person name="Alvarez J."/>
        </authorList>
    </citation>
    <scope>FUNCTION</scope>
</reference>
<reference key="18">
    <citation type="journal article" date="2014" name="EMBO Rep.">
        <title>MICU1 and MICU2 play nonredundant roles in the regulation of the mitochondrial calcium uniporter.</title>
        <authorList>
            <person name="Kamer K.J."/>
            <person name="Mootha V.K."/>
        </authorList>
    </citation>
    <scope>FUNCTION</scope>
    <scope>MUTAGENESIS OF ASP-231; GLU-242; ASP-421 AND GLU-432</scope>
</reference>
<reference key="19">
    <citation type="journal article" date="2014" name="Mol. Biol. Cell">
        <title>SLC25A23 augments mitochondrial Ca(2+) uptake, interacts with MCU, and induces oxidative stress-mediated cell death.</title>
        <authorList>
            <person name="Hoffman N.E."/>
            <person name="Chandramoorthy H.C."/>
            <person name="Shanmughapriya S."/>
            <person name="Zhang X.Q."/>
            <person name="Vallem S."/>
            <person name="Doonan P.J."/>
            <person name="Malliankaraman K."/>
            <person name="Guo S."/>
            <person name="Rajan S."/>
            <person name="Elrod J.W."/>
            <person name="Koch W.J."/>
            <person name="Cheung J.Y."/>
            <person name="Madesh M."/>
        </authorList>
    </citation>
    <scope>INTERACTION WITH SLC25A23</scope>
</reference>
<reference key="20">
    <citation type="journal article" date="2014" name="Mol. Cell">
        <title>MICU1 and MICU2 finely tune the mitochondrial Ca(2+) uniporter by exerting opposite effects on MCU activity.</title>
        <authorList>
            <person name="Patron M."/>
            <person name="Checchetto V."/>
            <person name="Raffaello A."/>
            <person name="Teardo E."/>
            <person name="Vecellio Reane D."/>
            <person name="Mantoan M."/>
            <person name="Granatiero V."/>
            <person name="Szabo I."/>
            <person name="De Stefani D."/>
            <person name="Rizzuto R."/>
        </authorList>
    </citation>
    <scope>FUNCTION</scope>
    <scope>SUBCELLULAR LOCATION</scope>
    <scope>INTERACTION WITH MICU2</scope>
</reference>
<reference key="21">
    <citation type="journal article" date="2014" name="Nat. Genet.">
        <title>Loss-of-function mutations in MICU1 cause a brain and muscle disorder linked to primary alterations in mitochondrial calcium signaling.</title>
        <authorList>
            <person name="Logan C.V."/>
            <person name="Szabadkai G."/>
            <person name="Sharpe J.A."/>
            <person name="Parry D.A."/>
            <person name="Torelli S."/>
            <person name="Childs A.M."/>
            <person name="Kriek M."/>
            <person name="Phadke R."/>
            <person name="Johnson C.A."/>
            <person name="Roberts N.Y."/>
            <person name="Bonthron D.T."/>
            <person name="Pysden K.A."/>
            <person name="Whyte T."/>
            <person name="Munteanu I."/>
            <person name="Foley A.R."/>
            <person name="Wheway G."/>
            <person name="Szymanska K."/>
            <person name="Natarajan S."/>
            <person name="Abdelhamed Z.A."/>
            <person name="Morgan J.E."/>
            <person name="Roper H."/>
            <person name="Santen G.W."/>
            <person name="Niks E.H."/>
            <person name="van der Pol W.L."/>
            <person name="Lindhout D."/>
            <person name="Raffaello A."/>
            <person name="De Stefani D."/>
            <person name="den Dunnen J.T."/>
            <person name="Sun Y."/>
            <person name="Ginjaar I."/>
            <person name="Sewry C.A."/>
            <person name="Hurles M."/>
            <person name="Rizzuto R."/>
            <person name="Duchen M.R."/>
            <person name="Muntoni F."/>
            <person name="Sheridan E."/>
        </authorList>
    </citation>
    <scope>INVOLVEMENT IN MPXPS</scope>
</reference>
<reference key="22">
    <citation type="journal article" date="2015" name="Cell Metab.">
        <title>The Ca(2+)-dependent release of the Mia40-induced MICU1-MICU2 dimer from MCU regulates mitochondrial Ca(2+) uptake.</title>
        <authorList>
            <person name="Petrungaro C."/>
            <person name="Zimmermann K.M."/>
            <person name="Kuettner V."/>
            <person name="Fischer M."/>
            <person name="Dengjel J."/>
            <person name="Bogeski I."/>
            <person name="Riemer J."/>
        </authorList>
    </citation>
    <scope>SUBUNIT</scope>
    <scope>TRANSIT PEPTIDE</scope>
    <scope>IDENTIFICATION IN THE UNIPLEX COMPLEX</scope>
    <scope>INTERACTION WITH CHCHD4</scope>
    <scope>MUTAGENESIS OF CYS-463</scope>
</reference>
<reference key="23">
    <citation type="journal article" date="2015" name="EMBO Rep.">
        <title>Structure and function of the N-terminal domain of the human mitochondrial calcium uniporter.</title>
        <authorList>
            <person name="Lee Y."/>
            <person name="Min C.K."/>
            <person name="Kim T.G."/>
            <person name="Song H.K."/>
            <person name="Lim Y."/>
            <person name="Kim D."/>
            <person name="Shin K."/>
            <person name="Kang M."/>
            <person name="Kang J.Y."/>
            <person name="Youn H.S."/>
            <person name="Lee J.G."/>
            <person name="An J.Y."/>
            <person name="Park K.R."/>
            <person name="Lim J.J."/>
            <person name="Kim J.H."/>
            <person name="Kim J.H."/>
            <person name="Park Z.Y."/>
            <person name="Kim Y.S."/>
            <person name="Wang J."/>
            <person name="Kim D.H."/>
            <person name="Eom S.H."/>
        </authorList>
    </citation>
    <scope>IDENTIFICATION IN THE UNIPLEX COMPLEX</scope>
</reference>
<reference key="24">
    <citation type="journal article" date="2015" name="Proteomics">
        <title>N-terminome analysis of the human mitochondrial proteome.</title>
        <authorList>
            <person name="Vaca Jacome A.S."/>
            <person name="Rabilloud T."/>
            <person name="Schaeffer-Reiss C."/>
            <person name="Rompais M."/>
            <person name="Ayoub D."/>
            <person name="Lane L."/>
            <person name="Bairoch A."/>
            <person name="Van Dorsselaer A."/>
            <person name="Carapito C."/>
        </authorList>
    </citation>
    <scope>IDENTIFICATION BY MASS SPECTROMETRY [LARGE SCALE ANALYSIS]</scope>
</reference>
<reference key="25">
    <citation type="journal article" date="2015" name="Sci. Rep.">
        <title>Rearrangement of MICU1 multimers for activation of MCU is solely controlled by cytosolic Ca(2.).</title>
        <authorList>
            <person name="Waldeck-Weiermair M."/>
            <person name="Malli R."/>
            <person name="Parichatikanond W."/>
            <person name="Gottschalk B."/>
            <person name="Madreiter-Sokolowski C.T."/>
            <person name="Klec C."/>
            <person name="Rost R."/>
            <person name="Graier W.F."/>
        </authorList>
    </citation>
    <scope>CALCIUM-BINDING</scope>
</reference>
<reference key="26">
    <citation type="journal article" date="2016" name="Biochim. Biophys. Acta">
        <title>Functional roles of MICU1 and MICU2 in mitochondrial Ca(2+) uptake.</title>
        <authorList>
            <person name="Matesanz-Isabel J."/>
            <person name="Arias-Del-Val J."/>
            <person name="Alvarez-Illera P."/>
            <person name="Fonteriz R.I."/>
            <person name="Montero M."/>
            <person name="Alvarez J."/>
        </authorList>
    </citation>
    <scope>FUNCTION</scope>
</reference>
<reference key="27">
    <citation type="journal article" date="2016" name="Elife">
        <title>Dual functions of a small regulatory subunit in the mitochondrial calcium uniporter complex.</title>
        <authorList>
            <person name="Tsai M.F."/>
            <person name="Phillips C.B."/>
            <person name="Ranaghan M."/>
            <person name="Tsai C.W."/>
            <person name="Wu Y."/>
            <person name="Willliams C."/>
            <person name="Miller C."/>
        </authorList>
    </citation>
    <scope>FUNCTION</scope>
    <scope>SUBCELLULAR LOCATION</scope>
    <scope>DOMAIN</scope>
    <scope>MUTAGENESIS OF 99-LYS--LYS-102</scope>
</reference>
<reference key="28">
    <citation type="journal article" date="2016" name="Mol. Cell">
        <title>A MICU1 splice variant confers high sensitivity to the mitochondrial Ca2+ uptake machinery of skeletal muscle.</title>
        <authorList>
            <person name="Vecellio Reane D."/>
            <person name="Vallese F."/>
            <person name="Checchetto V."/>
            <person name="Acquasaliente L."/>
            <person name="Butera G."/>
            <person name="De Filippis V."/>
            <person name="Szabo I."/>
            <person name="Zanotti G."/>
            <person name="Rizzuto R."/>
            <person name="Raffaello A."/>
        </authorList>
    </citation>
    <scope>ALTERNATIVE SPLICING</scope>
</reference>
<reference key="29">
    <citation type="journal article" date="2016" name="Nat. Commun.">
        <title>PRMT1-mediated methylation of MICU1 determines the UCP2/3 dependency of mitochondrial Ca(2+) uptake in immortalized cells.</title>
        <authorList>
            <person name="Madreiter-Sokolowski C.T."/>
            <person name="Klec C."/>
            <person name="Parichatikanond W."/>
            <person name="Stryeck S."/>
            <person name="Gottschalk B."/>
            <person name="Pulido S."/>
            <person name="Rost R."/>
            <person name="Eroglu E."/>
            <person name="Hofmann N.A."/>
            <person name="Bondarenko A.I."/>
            <person name="Madl T."/>
            <person name="Waldeck-Weiermair M."/>
            <person name="Malli R."/>
            <person name="Graier W.F."/>
        </authorList>
    </citation>
    <scope>METHYLATION AT ARG-455</scope>
    <scope>INTERACTION WITH UCP2</scope>
    <scope>MUTAGENESIS OF ARG-455</scope>
</reference>
<reference key="30">
    <citation type="journal article" date="2016" name="Neurol. Genet.">
        <title>Homozygous deletion in MICU1 presenting with fatigue and lethargy in childhood.</title>
        <authorList>
            <person name="Lewis-Smith D."/>
            <person name="Kamer K.J."/>
            <person name="Griffin H."/>
            <person name="Childs A.M."/>
            <person name="Pysden K."/>
            <person name="Titov D."/>
            <person name="Duff J."/>
            <person name="Pyle A."/>
            <person name="Taylor R.W."/>
            <person name="Yu-Wai-Man P."/>
            <person name="Ramesh V."/>
            <person name="Horvath R."/>
            <person name="Mootha V.K."/>
            <person name="Chinnery P.F."/>
        </authorList>
    </citation>
    <scope>INVOLVEMENT IN A SYNDROME CAUSING FATIGUE AND LETHARGY IN CHILDHOOD</scope>
</reference>
<reference key="31">
    <citation type="journal article" date="2017" name="EMBO Rep.">
        <title>High-affinity cooperative Ca2+ binding by MICU1-MICU2 serves as an on-off switch for the uniporter.</title>
        <authorList>
            <person name="Kamer K.J."/>
            <person name="Grabarek Z."/>
            <person name="Mootha V.K."/>
        </authorList>
    </citation>
    <scope>FUNCTION</scope>
    <scope>SUBCELLULAR LOCATION</scope>
    <scope>INTERACTION WITH MICU2</scope>
</reference>
<reference key="32">
    <citation type="journal article" date="2018" name="Cell Rep.">
        <title>MICU1 confers protection from MCU-dependent manganese toxicity.</title>
        <authorList>
            <person name="Wettmarshausen J."/>
            <person name="Goh V."/>
            <person name="Huang K.T."/>
            <person name="Arduino D.M."/>
            <person name="Tripathi U."/>
            <person name="Leimpek A."/>
            <person name="Cheng Y."/>
            <person name="Pittis A.A."/>
            <person name="Gabaldon T."/>
            <person name="Mokranjac D."/>
            <person name="Hajnoczky G."/>
            <person name="Perocchi F."/>
        </authorList>
    </citation>
    <scope>FUNCTION</scope>
</reference>
<reference key="33">
    <citation type="journal article" date="2018" name="Proc. Natl. Acad. Sci. U.S.A.">
        <title>MICU1 imparts the mitochondrial uniporter with the ability to discriminate between Ca2+ and Mn2+.</title>
        <authorList>
            <person name="Kamer K.J."/>
            <person name="Sancak Y."/>
            <person name="Fomina Y."/>
            <person name="Meisel J.D."/>
            <person name="Chaudhuri D."/>
            <person name="Grabarek Z."/>
            <person name="Mootha V.K."/>
        </authorList>
    </citation>
    <scope>FUNCTION</scope>
</reference>
<reference key="34">
    <citation type="journal article" date="2018" name="Mol. Cell">
        <title>MICU1 Interacts with the D-Ring of the MCU Pore to Control Its Ca2+ Flux and Sensitivity to Ru360.</title>
        <authorList>
            <person name="Paillard M."/>
            <person name="Csordas G."/>
            <person name="Huang K.T."/>
            <person name="Varnai P."/>
            <person name="Joseph S.K."/>
            <person name="Hajnoczky G."/>
        </authorList>
    </citation>
    <scope>FUNCTION</scope>
    <scope>SUBCELLULAR LOCATION</scope>
    <scope>INTERACTION WITH SMDT1 AND MCU</scope>
    <scope>MUTAGENESIS OF 99-LYS--ARG-103 AND 440-ARG--LEU-445</scope>
</reference>
<reference key="35">
    <citation type="journal article" date="2019" name="Elife">
        <title>The conserved aspartate ring of MCU mediates MICU1 binding and regulation in the mitochondrial calcium uniporter complex.</title>
        <authorList>
            <person name="Phillips C.B."/>
            <person name="Tsai C.W."/>
            <person name="Tsai M.F."/>
        </authorList>
    </citation>
    <scope>FUNCTION</scope>
    <scope>INTERACTION WITH SMDT1 AND MCU</scope>
    <scope>MUTAGENESIS OF ARG-119 AND ARG-154</scope>
</reference>
<reference key="36">
    <citation type="journal article" date="2019" name="EMBO Rep.">
        <title>The crystal structure of MICU2 provides insight into Ca2+ binding and MICU1-MICU2 heterodimer formation.</title>
        <authorList>
            <person name="Wu W."/>
            <person name="Shen Q."/>
            <person name="Lei Z."/>
            <person name="Qiu Z."/>
            <person name="Li D."/>
            <person name="Pei H."/>
            <person name="Zheng J."/>
            <person name="Jia Z."/>
        </authorList>
    </citation>
    <scope>INTERACTION WITH MICU2</scope>
    <scope>MUTAGENESIS OF PHE-383</scope>
</reference>
<reference key="37">
    <citation type="journal article" date="2019" name="Nat. Commun.">
        <title>MICU1 controls cristae junction and spatially anchors mitochondrial Ca2+ uniporter complex.</title>
        <authorList>
            <person name="Gottschalk B."/>
            <person name="Klec C."/>
            <person name="Leitinger G."/>
            <person name="Bernhart E."/>
            <person name="Rost R."/>
            <person name="Bischof H."/>
            <person name="Madreiter-Sokolowski C.T."/>
            <person name="Radulovic S."/>
            <person name="Eroglu E."/>
            <person name="Sattler W."/>
            <person name="Waldeck-Weiermair M."/>
            <person name="Malli R."/>
            <person name="Graier W.F."/>
        </authorList>
    </citation>
    <scope>FUNCTION</scope>
    <scope>SUBCELLULAR LOCATION</scope>
</reference>
<reference key="38">
    <citation type="journal article" date="2020" name="JIMD Rep.">
        <title>Developmental brain abnormalities and acute encephalopathy in a patient with myopathy with extrapyramidal signs secondary to pathogenic variants in MICU1.</title>
        <authorList>
            <person name="Wilton K.M."/>
            <person name="Morales-Rosado J.A."/>
            <person name="Selcen D."/>
            <person name="Muthusamy K."/>
            <person name="Ewing S."/>
            <person name="Agre K."/>
            <person name="Nickels K."/>
            <person name="Klee E.W."/>
            <person name="Ho M.L."/>
            <person name="Morava E."/>
        </authorList>
    </citation>
    <scope>VARIANT MPXPS PRO-129</scope>
</reference>
<reference key="39">
    <citation type="journal article" date="2021" name="Elife">
        <title>The mechanism of MICU-dependent gating of the mitochondrial Ca2+uniporter.</title>
        <authorList>
            <person name="Garg V."/>
            <person name="Suzuki J."/>
            <person name="Paranjpe I."/>
            <person name="Unsulangi T."/>
            <person name="Boyman L."/>
            <person name="Milescu L.S."/>
            <person name="Lederer W.J."/>
            <person name="Kirichok Y."/>
        </authorList>
    </citation>
    <scope>FUNCTION</scope>
</reference>
<reference key="40">
    <citation type="journal article" date="2022" name="Mol. Cell">
        <title>Mechanisms and significance of tissue-specific MICU regulation of the mitochondrial calcium uniporter complex.</title>
        <authorList>
            <person name="Tsai C.W."/>
            <person name="Rodriguez M.X."/>
            <person name="Van Keuren A.M."/>
            <person name="Phillips C.B."/>
            <person name="Shushunov H.M."/>
            <person name="Lee J.E."/>
            <person name="Garcia A.M."/>
            <person name="Ambardekar A.V."/>
            <person name="Cleveland J.C. Jr."/>
            <person name="Reisz J.A."/>
            <person name="Proenza C."/>
            <person name="Chatfield K.C."/>
            <person name="Tsai M.F."/>
        </authorList>
    </citation>
    <scope>FUNCTION</scope>
    <scope>SUBUNIT</scope>
    <scope>DISULFIDE BOND</scope>
    <scope>PROTEOLYTIC CLEAVAGE</scope>
    <scope>MUTAGENESIS OF CYS-463</scope>
</reference>
<reference key="41">
    <citation type="journal article" date="2021" name="Mol. Cell. Pediatr.">
        <title>Identification of a novel MICU1 nonsense variant causes myopathy with extrapyramidal signs in an Iranian consanguineous family.</title>
        <authorList>
            <person name="Bitarafan F."/>
            <person name="Khodaeian M."/>
            <person name="Amjadi Sardehaei E."/>
            <person name="Darvishi F.Z."/>
            <person name="Almadani N."/>
            <person name="Nilipour Y."/>
            <person name="Garshasbi M."/>
        </authorList>
    </citation>
    <scope>VARIANT MPXPS 129-ARG--GLN-476 DEL</scope>
</reference>
<reference key="42">
    <citation type="journal article" date="2021" name="Neuropathol. Appl. Neurobiol.">
        <title>Molecular pathophysiology of human MICU1 deficiency.</title>
        <authorList>
            <person name="Kohlschmidt N."/>
            <person name="Elbracht M."/>
            <person name="Czech A."/>
            <person name="Haeusler M."/>
            <person name="Phan V."/>
            <person name="Toepf A."/>
            <person name="Huang K.T."/>
            <person name="Bartok A."/>
            <person name="Eggermann K."/>
            <person name="Zippel S."/>
            <person name="Eggermann T."/>
            <person name="Freier E."/>
            <person name="Gross C."/>
            <person name="Lochmueller H."/>
            <person name="Horvath R."/>
            <person name="Hajnoczky G."/>
            <person name="Weis J."/>
            <person name="Roos A."/>
        </authorList>
    </citation>
    <scope>VARIANTS MPXPS 18-ARG--GLN-476 DEL AND ARG-185 DEL</scope>
</reference>
<reference key="43">
    <citation type="journal article" date="2023" name="Cell Chem. Biol.">
        <title>MICU1 controls the sensitivity of the mitochondrial Ca2+ uniporter to activators and inhibitors.</title>
        <authorList>
            <person name="Rodriguez-Prados M."/>
            <person name="Huang K.T."/>
            <person name="Marta K."/>
            <person name="Paillard M."/>
            <person name="Csordas G."/>
            <person name="Joseph S.K."/>
            <person name="Hajnoczky G."/>
        </authorList>
    </citation>
    <scope>FUNCTION</scope>
    <scope>ACTIVITY REGULATION</scope>
</reference>
<reference key="44">
    <citation type="journal article" date="2023" name="Proc. Natl. Acad. Sci. U.S.A.">
        <title>Evidence supporting the MICU1 occlusion mechanism and against the potentiation model in the mitochondrial calcium uniporter complex.</title>
        <authorList>
            <person name="Tsai C.W."/>
            <person name="Liu T.Y."/>
            <person name="Chao F.Y."/>
            <person name="Tu Y.C."/>
            <person name="Rodriguez M.X."/>
            <person name="Van Keuren A.M."/>
            <person name="Ma Z."/>
            <person name="Bankston J."/>
            <person name="Tsai M.F."/>
        </authorList>
    </citation>
    <scope>FUNCTION</scope>
    <scope>MUTAGENESIS OF LYS-126; ASP-231; GLU-242; ASP-421 AND GLU-432</scope>
</reference>
<reference key="45">
    <citation type="journal article" date="2023" name="Proc. Natl. Acad. Sci. U.S.A.">
        <title>MICU1 occludes the mitochondrial calcium uniporter in divalent-free conditions.</title>
        <authorList>
            <person name="Rodriguez-Prados M."/>
            <person name="Berezhnaya E."/>
            <person name="Castromonte M.T."/>
            <person name="Menezes-Filho S.L."/>
            <person name="Paillard M."/>
            <person name="Hajnoczky G."/>
        </authorList>
    </citation>
    <scope>FUNCTION</scope>
    <scope>MUTAGENESIS OF ASP-231; GLU-242; ASP-421 AND GLU-432</scope>
</reference>
<reference key="46">
    <citation type="journal article" date="2023" name="Sci. Signal.">
        <title>MICU1 regulates mitochondrial cristae structure and function independently of the mitochondrial Ca2+ uniporter channel.</title>
        <authorList>
            <person name="Tomar D."/>
            <person name="Thomas M."/>
            <person name="Garbincius J.F."/>
            <person name="Kolmetzky D.W."/>
            <person name="Salik O."/>
            <person name="Jadiya P."/>
            <person name="Joseph S.K."/>
            <person name="Carpenter A.C."/>
            <person name="Hajnoczky G."/>
            <person name="Elrod J.W."/>
        </authorList>
    </citation>
    <scope>FUNCTION</scope>
    <scope>INTERACTION WITH THE MICOS COMPLEX</scope>
</reference>
<reference key="47">
    <citation type="journal article" date="2014" name="EMBO J.">
        <title>Structural and mechanistic insights into MICU1 regulation of mitochondrial calcium uptake.</title>
        <authorList>
            <person name="Wang L."/>
            <person name="Yang X."/>
            <person name="Li S."/>
            <person name="Wang Z."/>
            <person name="Liu Y."/>
            <person name="Feng J."/>
            <person name="Zhu Y."/>
            <person name="Shen Y."/>
        </authorList>
    </citation>
    <scope>X-RAY CRYSTALLOGRAPHY (3.2 ANGSTROMS) OF 97-476</scope>
    <scope>X-RAY CRYSTALLOGRAPHY (2.7 ANGSTROMS) OF 97-444 IN COMPLEX WITH CALCIUM</scope>
    <scope>CALCIUM-BINDING SITES</scope>
    <scope>MUTAGENESIS OF ARG-221; ASP-376 AND 383-PHE--HIS-385</scope>
</reference>
<reference evidence="66" key="48">
    <citation type="journal article" date="2020" name="Elife">
        <title>Structures reveal gatekeeping of the mitochondrial Ca2+ uniporter by MICU1-MICU2.</title>
        <authorList>
            <person name="Wang C."/>
            <person name="Jacewicz A."/>
            <person name="Delgado B.D."/>
            <person name="Baradaran R."/>
            <person name="Long S.B."/>
        </authorList>
    </citation>
    <scope>STRUCTURE BY ELECTRON MICROSCOPY (3.10 ANGSTROMS) OF 94-376 OF THE UNIPLEX COMPLEX</scope>
    <scope>FUNCTION</scope>
    <scope>IDENTIFICATION IN THE UNIPLEX COMPLEX</scope>
    <scope>MUTAGENESIS OF PHE-106; ARG-117; TYR-121; LYS-126 AND ARG-129</scope>
</reference>
<reference evidence="64 65" key="49">
    <citation type="journal article" date="2020" name="Elife">
        <title>Structural insights into the Ca2+-dependent gating of the human mitochondrial calcium uniporter.</title>
        <authorList>
            <person name="Wang Y."/>
            <person name="Han Y."/>
            <person name="She J."/>
            <person name="Nguyen N.X."/>
            <person name="Mootha V.K."/>
            <person name="Bai X.C."/>
            <person name="Jiang Y."/>
        </authorList>
    </citation>
    <scope>STRUCTURE BY ELECTRON MICROSCOPY (4.17 ANGSTROMS) OF THE UNIPLEX COMPLEX</scope>
    <scope>FUNCTION</scope>
    <scope>IDENTIFICATION IN THE UNIPLEX COMPLEX</scope>
</reference>
<reference evidence="59 60" key="50">
    <citation type="journal article" date="2020" name="EMBO J.">
        <title>The structure of the MICU1-MICU2 complex unveils the regulation of the mitochondrial calcium uniporter.</title>
        <authorList>
            <person name="Wu W."/>
            <person name="Shen Q."/>
            <person name="Zhang R."/>
            <person name="Qiu Z."/>
            <person name="Wang Y."/>
            <person name="Zheng J."/>
            <person name="Jia Z."/>
        </authorList>
    </citation>
    <scope>X-RAY CRYSTALLOGRAPHY (2.10 ANGSTROMS) OF 97-444 IN COMPLEX WITH MICU2 AND CALCIUM</scope>
    <scope>FUNCTION</scope>
    <scope>INTERACTION WITH MICU2</scope>
    <scope>MUTAGENESIS OF 99-LYS--ARG-103</scope>
    <scope>MUTAGENESIS OF GLN-253; GLN-398 AND GLU-427</scope>
</reference>
<reference evidence="61" key="51">
    <citation type="journal article" date="2020" name="IUCrJ">
        <title>Structure of the MICU1-MICU2 heterodimer provides insights into the gatekeeping threshold shift.</title>
        <authorList>
            <person name="Park J."/>
            <person name="Lee Y."/>
            <person name="Park T."/>
            <person name="Kang J.Y."/>
            <person name="Mun S.A."/>
            <person name="Jin M."/>
            <person name="Yang J."/>
            <person name="Eom S.H."/>
        </authorList>
    </citation>
    <scope>X-RAY CRYSTALLOGRAPHY (3.10 ANGSTROMS) OF 84-401 IN COMPLEX WITH MICU2</scope>
    <scope>FUNCTION</scope>
    <scope>INTERACTION WITH MICU2</scope>
</reference>
<reference evidence="62 63" key="52">
    <citation type="journal article" date="2020" name="Nature">
        <title>Structure and mechanism of the mitochondrial Ca2+ uniporter holocomplex.</title>
        <authorList>
            <person name="Fan M."/>
            <person name="Zhang J."/>
            <person name="Tsai C.W."/>
            <person name="Orlando B.J."/>
            <person name="Rodriguez M."/>
            <person name="Xu Y."/>
            <person name="Liao M."/>
            <person name="Tsai M.F."/>
            <person name="Feng L."/>
        </authorList>
    </citation>
    <scope>STRUCTURE BY ELECTRON MICROSCOPY (3.20 ANGSTROMS) OF 104-466 OF THE UNIPLEX COMPLEX</scope>
    <scope>FUNCTION</scope>
    <scope>IDENTIFICATION IN THE UNIPLEX COMPLEX</scope>
    <scope>MUTAGENESIS OF TYR-114; TYR-121; 126-LYS--ARG-129 AND 259-ARG--ARG-263</scope>
</reference>
<reference evidence="58" key="53">
    <citation type="journal article" date="2021" name="Protein Cell">
        <title>Structure of intact human MCU supercomplex with the auxiliary MICU subunits.</title>
        <authorList>
            <person name="Zhuo W."/>
            <person name="Zhou H."/>
            <person name="Guo R."/>
            <person name="Yi J."/>
            <person name="Zhang L."/>
            <person name="Yu L."/>
            <person name="Sui Y."/>
            <person name="Zeng W."/>
            <person name="Wang P."/>
            <person name="Yang M."/>
        </authorList>
    </citation>
    <scope>STRUCTURE BY ELECTRON MICROSCOPY (3.60 ANGSTROMS) OF THE UNIPLEX COMPLEX</scope>
    <scope>IDENTIFICATION IN THE UNIPLEX COMPLEX</scope>
</reference>
<organism>
    <name type="scientific">Homo sapiens</name>
    <name type="common">Human</name>
    <dbReference type="NCBI Taxonomy" id="9606"/>
    <lineage>
        <taxon>Eukaryota</taxon>
        <taxon>Metazoa</taxon>
        <taxon>Chordata</taxon>
        <taxon>Craniata</taxon>
        <taxon>Vertebrata</taxon>
        <taxon>Euteleostomi</taxon>
        <taxon>Mammalia</taxon>
        <taxon>Eutheria</taxon>
        <taxon>Euarchontoglires</taxon>
        <taxon>Primates</taxon>
        <taxon>Haplorrhini</taxon>
        <taxon>Catarrhini</taxon>
        <taxon>Hominidae</taxon>
        <taxon>Homo</taxon>
    </lineage>
</organism>
<dbReference type="EMBL" id="AK023318">
    <property type="protein sequence ID" value="BAG51182.1"/>
    <property type="molecule type" value="mRNA"/>
</dbReference>
<dbReference type="EMBL" id="AK296086">
    <property type="protein sequence ID" value="BAG58841.1"/>
    <property type="molecule type" value="mRNA"/>
</dbReference>
<dbReference type="EMBL" id="AK298347">
    <property type="protein sequence ID" value="BAG60593.1"/>
    <property type="molecule type" value="mRNA"/>
</dbReference>
<dbReference type="EMBL" id="AL117423">
    <property type="protein sequence ID" value="CAB55915.1"/>
    <property type="molecule type" value="mRNA"/>
</dbReference>
<dbReference type="EMBL" id="AC091769">
    <property type="status" value="NOT_ANNOTATED_CDS"/>
    <property type="molecule type" value="Genomic_DNA"/>
</dbReference>
<dbReference type="EMBL" id="AL513185">
    <property type="status" value="NOT_ANNOTATED_CDS"/>
    <property type="molecule type" value="Genomic_DNA"/>
</dbReference>
<dbReference type="EMBL" id="AL356009">
    <property type="status" value="NOT_ANNOTATED_CDS"/>
    <property type="molecule type" value="Genomic_DNA"/>
</dbReference>
<dbReference type="EMBL" id="CH471083">
    <property type="protein sequence ID" value="EAW54459.1"/>
    <property type="molecule type" value="Genomic_DNA"/>
</dbReference>
<dbReference type="EMBL" id="BC004190">
    <property type="protein sequence ID" value="AAH04190.1"/>
    <property type="molecule type" value="mRNA"/>
</dbReference>
<dbReference type="EMBL" id="BC004216">
    <property type="protein sequence ID" value="AAH04216.1"/>
    <property type="molecule type" value="mRNA"/>
</dbReference>
<dbReference type="EMBL" id="BC016641">
    <property type="protein sequence ID" value="AAH16641.1"/>
    <property type="molecule type" value="mRNA"/>
</dbReference>
<dbReference type="EMBL" id="AK022697">
    <property type="protein sequence ID" value="BAB14187.1"/>
    <property type="status" value="ALT_INIT"/>
    <property type="molecule type" value="mRNA"/>
</dbReference>
<dbReference type="EMBL" id="Y17711">
    <property type="protein sequence ID" value="CAA76830.1"/>
    <property type="status" value="ALT_SEQ"/>
    <property type="molecule type" value="mRNA"/>
</dbReference>
<dbReference type="CCDS" id="CCDS55714.1">
    <molecule id="Q9BPX6-4"/>
</dbReference>
<dbReference type="CCDS" id="CCDS55715.1">
    <molecule id="Q9BPX6-1"/>
</dbReference>
<dbReference type="PIR" id="T17225">
    <property type="entry name" value="T17225"/>
</dbReference>
<dbReference type="RefSeq" id="NP_001182447.1">
    <molecule id="Q9BPX6-1"/>
    <property type="nucleotide sequence ID" value="NM_001195518.2"/>
</dbReference>
<dbReference type="RefSeq" id="NP_001182448.1">
    <molecule id="Q9BPX6-4"/>
    <property type="nucleotide sequence ID" value="NM_001195519.2"/>
</dbReference>
<dbReference type="RefSeq" id="NP_006068.2">
    <molecule id="Q9BPX6-3"/>
    <property type="nucleotide sequence ID" value="NM_006077.4"/>
</dbReference>
<dbReference type="RefSeq" id="XP_047280397.1">
    <molecule id="Q9BPX6-2"/>
    <property type="nucleotide sequence ID" value="XM_047424441.1"/>
</dbReference>
<dbReference type="RefSeq" id="XP_054220459.1">
    <molecule id="Q9BPX6-2"/>
    <property type="nucleotide sequence ID" value="XM_054364484.1"/>
</dbReference>
<dbReference type="PDB" id="4NSC">
    <property type="method" value="X-ray"/>
    <property type="resolution" value="3.20 A"/>
    <property type="chains" value="A/B/C/D/E/F=97-476"/>
</dbReference>
<dbReference type="PDB" id="4NSD">
    <property type="method" value="X-ray"/>
    <property type="resolution" value="2.70 A"/>
    <property type="chains" value="A/B=97-444"/>
</dbReference>
<dbReference type="PDB" id="6K7Y">
    <property type="method" value="EM"/>
    <property type="resolution" value="3.60 A"/>
    <property type="chains" value="I/V=1-476"/>
</dbReference>
<dbReference type="PDB" id="6LB7">
    <property type="method" value="X-ray"/>
    <property type="resolution" value="2.10 A"/>
    <property type="chains" value="A/C=97-444"/>
</dbReference>
<dbReference type="PDB" id="6LB8">
    <property type="method" value="X-ray"/>
    <property type="resolution" value="3.28 A"/>
    <property type="chains" value="A/C=97-444"/>
</dbReference>
<dbReference type="PDB" id="6LE5">
    <property type="method" value="X-ray"/>
    <property type="resolution" value="3.10 A"/>
    <property type="chains" value="A/D/E/G=97-444"/>
</dbReference>
<dbReference type="PDB" id="6WDN">
    <property type="method" value="EM"/>
    <property type="resolution" value="3.20 A"/>
    <property type="chains" value="B=104-466"/>
</dbReference>
<dbReference type="PDB" id="6WDO">
    <property type="method" value="EM"/>
    <property type="resolution" value="3.60 A"/>
    <property type="chains" value="Q/S=104-442"/>
</dbReference>
<dbReference type="PDB" id="6XJV">
    <property type="method" value="EM"/>
    <property type="resolution" value="4.17 A"/>
    <property type="chains" value="Q/S=1-476"/>
</dbReference>
<dbReference type="PDB" id="6XJX">
    <property type="method" value="EM"/>
    <property type="resolution" value="4.60 A"/>
    <property type="chains" value="Q=1-476"/>
</dbReference>
<dbReference type="PDB" id="6XQN">
    <property type="method" value="EM"/>
    <property type="resolution" value="3.30 A"/>
    <property type="chains" value="I=94-476"/>
</dbReference>
<dbReference type="PDB" id="6XQO">
    <property type="method" value="EM"/>
    <property type="resolution" value="3.10 A"/>
    <property type="chains" value="I=94-476"/>
</dbReference>
<dbReference type="PDBsum" id="4NSC"/>
<dbReference type="PDBsum" id="4NSD"/>
<dbReference type="PDBsum" id="6K7Y"/>
<dbReference type="PDBsum" id="6LB7"/>
<dbReference type="PDBsum" id="6LB8"/>
<dbReference type="PDBsum" id="6LE5"/>
<dbReference type="PDBsum" id="6WDN"/>
<dbReference type="PDBsum" id="6WDO"/>
<dbReference type="PDBsum" id="6XJV"/>
<dbReference type="PDBsum" id="6XJX"/>
<dbReference type="PDBsum" id="6XQN"/>
<dbReference type="PDBsum" id="6XQO"/>
<dbReference type="EMDB" id="EMD-21642"/>
<dbReference type="EMDB" id="EMD-21643"/>
<dbReference type="EMDB" id="EMD-22215"/>
<dbReference type="EMDB" id="EMD-22216"/>
<dbReference type="EMDB" id="EMD-22290"/>
<dbReference type="EMDB" id="EMD-22291"/>
<dbReference type="EMDB" id="EMD-9945"/>
<dbReference type="SMR" id="Q9BPX6"/>
<dbReference type="BioGRID" id="115646">
    <property type="interactions" value="88"/>
</dbReference>
<dbReference type="ComplexPortal" id="CPX-5961">
    <property type="entry name" value="Mitochondrial calcium uniporter complex, MICU1-MICU2 variant"/>
</dbReference>
<dbReference type="ComplexPortal" id="CPX-5963">
    <property type="entry name" value="Mitochondrial calcium uniporter complex, MICU1 variant"/>
</dbReference>
<dbReference type="ComplexPortal" id="CPX-5965">
    <property type="entry name" value="Mitochondrial calcium uniporter complex, MICU1-MICU3 variant"/>
</dbReference>
<dbReference type="ComplexPortal" id="CPX-5966">
    <property type="entry name" value="Mitochondrial calcium uniporter complex, MICUB variant"/>
</dbReference>
<dbReference type="CORUM" id="Q9BPX6"/>
<dbReference type="DIP" id="DIP-53438N"/>
<dbReference type="FunCoup" id="Q9BPX6">
    <property type="interactions" value="1572"/>
</dbReference>
<dbReference type="IntAct" id="Q9BPX6">
    <property type="interactions" value="51"/>
</dbReference>
<dbReference type="MINT" id="Q9BPX6"/>
<dbReference type="STRING" id="9606.ENSP00000493232"/>
<dbReference type="Allergome" id="3325">
    <property type="allergen name" value="Hom s 4.0101"/>
</dbReference>
<dbReference type="Allergome" id="414">
    <property type="allergen name" value="Hom s 4"/>
</dbReference>
<dbReference type="TCDB" id="8.A.44.1.1">
    <property type="family name" value="the mitochondrial ef hand ca(2+) uniporter regulator (micu) family"/>
</dbReference>
<dbReference type="GlyGen" id="Q9BPX6">
    <property type="glycosylation" value="1 site, 1 O-linked glycan (1 site)"/>
</dbReference>
<dbReference type="iPTMnet" id="Q9BPX6"/>
<dbReference type="PhosphoSitePlus" id="Q9BPX6"/>
<dbReference type="SwissPalm" id="Q9BPX6"/>
<dbReference type="BioMuta" id="MICU1"/>
<dbReference type="DMDM" id="74761192"/>
<dbReference type="jPOST" id="Q9BPX6"/>
<dbReference type="MassIVE" id="Q9BPX6"/>
<dbReference type="PaxDb" id="9606-ENSP00000354415"/>
<dbReference type="PeptideAtlas" id="Q9BPX6"/>
<dbReference type="ProteomicsDB" id="78588">
    <molecule id="Q9BPX6-1"/>
</dbReference>
<dbReference type="ProteomicsDB" id="78589">
    <molecule id="Q9BPX6-2"/>
</dbReference>
<dbReference type="ProteomicsDB" id="78590">
    <molecule id="Q9BPX6-3"/>
</dbReference>
<dbReference type="ProteomicsDB" id="78591">
    <molecule id="Q9BPX6-4"/>
</dbReference>
<dbReference type="ProteomicsDB" id="78592">
    <molecule id="Q9BPX6-5"/>
</dbReference>
<dbReference type="Pumba" id="Q9BPX6"/>
<dbReference type="Antibodypedia" id="29257">
    <property type="antibodies" value="182 antibodies from 28 providers"/>
</dbReference>
<dbReference type="DNASU" id="10367"/>
<dbReference type="Ensembl" id="ENST00000361114.10">
    <molecule id="Q9BPX6-1"/>
    <property type="protein sequence ID" value="ENSP00000354415.5"/>
    <property type="gene ID" value="ENSG00000107745.20"/>
</dbReference>
<dbReference type="Ensembl" id="ENST00000398763.8">
    <molecule id="Q9BPX6-5"/>
    <property type="protein sequence ID" value="ENSP00000381747.4"/>
    <property type="gene ID" value="ENSG00000107745.20"/>
</dbReference>
<dbReference type="Ensembl" id="ENST00000418483.6">
    <molecule id="Q9BPX6-4"/>
    <property type="protein sequence ID" value="ENSP00000402470.2"/>
    <property type="gene ID" value="ENSG00000107745.20"/>
</dbReference>
<dbReference type="Ensembl" id="ENST00000635239.1">
    <molecule id="Q9BPX6-6"/>
    <property type="protein sequence ID" value="ENSP00000489563.1"/>
    <property type="gene ID" value="ENSG00000107745.20"/>
</dbReference>
<dbReference type="GeneID" id="10367"/>
<dbReference type="KEGG" id="hsa:10367"/>
<dbReference type="MANE-Select" id="ENST00000361114.10">
    <property type="protein sequence ID" value="ENSP00000354415.5"/>
    <property type="RefSeq nucleotide sequence ID" value="NM_001195518.2"/>
    <property type="RefSeq protein sequence ID" value="NP_001182447.1"/>
</dbReference>
<dbReference type="UCSC" id="uc001jtb.3">
    <molecule id="Q9BPX6-1"/>
    <property type="organism name" value="human"/>
</dbReference>
<dbReference type="AGR" id="HGNC:1530"/>
<dbReference type="CTD" id="10367"/>
<dbReference type="DisGeNET" id="10367"/>
<dbReference type="GeneCards" id="MICU1"/>
<dbReference type="HGNC" id="HGNC:1530">
    <property type="gene designation" value="MICU1"/>
</dbReference>
<dbReference type="HPA" id="ENSG00000107745">
    <property type="expression patterns" value="Low tissue specificity"/>
</dbReference>
<dbReference type="MalaCards" id="MICU1"/>
<dbReference type="MIM" id="605084">
    <property type="type" value="gene"/>
</dbReference>
<dbReference type="MIM" id="615673">
    <property type="type" value="phenotype"/>
</dbReference>
<dbReference type="neXtProt" id="NX_Q9BPX6"/>
<dbReference type="OpenTargets" id="ENSG00000107745"/>
<dbReference type="Orphanet" id="401768">
    <property type="disease" value="Proximal myopathy with extrapyramidal signs"/>
</dbReference>
<dbReference type="PharmGKB" id="PA26110"/>
<dbReference type="VEuPathDB" id="HostDB:ENSG00000107745"/>
<dbReference type="eggNOG" id="KOG2643">
    <property type="taxonomic scope" value="Eukaryota"/>
</dbReference>
<dbReference type="GeneTree" id="ENSGT00950000183079"/>
<dbReference type="HOGENOM" id="CLU_027103_3_1_1"/>
<dbReference type="InParanoid" id="Q9BPX6"/>
<dbReference type="OMA" id="YPEYMFF"/>
<dbReference type="OrthoDB" id="10056860at2759"/>
<dbReference type="PAN-GO" id="Q9BPX6">
    <property type="GO annotations" value="4 GO annotations based on evolutionary models"/>
</dbReference>
<dbReference type="PhylomeDB" id="Q9BPX6"/>
<dbReference type="TreeFam" id="TF313815"/>
<dbReference type="PathwayCommons" id="Q9BPX6"/>
<dbReference type="Reactome" id="R-HSA-8949215">
    <property type="pathway name" value="Mitochondrial calcium ion transport"/>
</dbReference>
<dbReference type="Reactome" id="R-HSA-8949664">
    <property type="pathway name" value="Processing of SMDT1"/>
</dbReference>
<dbReference type="SignaLink" id="Q9BPX6"/>
<dbReference type="SIGNOR" id="Q9BPX6"/>
<dbReference type="BioGRID-ORCS" id="10367">
    <property type="hits" value="18 hits in 1153 CRISPR screens"/>
</dbReference>
<dbReference type="ChiTaRS" id="MICU1">
    <property type="organism name" value="human"/>
</dbReference>
<dbReference type="EvolutionaryTrace" id="Q9BPX6"/>
<dbReference type="GeneWiki" id="CBARA1"/>
<dbReference type="GenomeRNAi" id="10367"/>
<dbReference type="Pharos" id="Q9BPX6">
    <property type="development level" value="Tbio"/>
</dbReference>
<dbReference type="PRO" id="PR:Q9BPX6"/>
<dbReference type="Proteomes" id="UP000005640">
    <property type="component" value="Chromosome 10"/>
</dbReference>
<dbReference type="RNAct" id="Q9BPX6">
    <property type="molecule type" value="protein"/>
</dbReference>
<dbReference type="Bgee" id="ENSG00000107745">
    <property type="expression patterns" value="Expressed in calcaneal tendon and 202 other cell types or tissues"/>
</dbReference>
<dbReference type="ExpressionAtlas" id="Q9BPX6">
    <property type="expression patterns" value="baseline and differential"/>
</dbReference>
<dbReference type="GO" id="GO:0034704">
    <property type="term" value="C:calcium channel complex"/>
    <property type="evidence" value="ECO:0000250"/>
    <property type="project" value="UniProtKB"/>
</dbReference>
<dbReference type="GO" id="GO:0044284">
    <property type="term" value="C:mitochondrial crista junction"/>
    <property type="evidence" value="ECO:0000314"/>
    <property type="project" value="UniProtKB"/>
</dbReference>
<dbReference type="GO" id="GO:0005743">
    <property type="term" value="C:mitochondrial inner membrane"/>
    <property type="evidence" value="ECO:0000314"/>
    <property type="project" value="UniProtKB"/>
</dbReference>
<dbReference type="GO" id="GO:0005758">
    <property type="term" value="C:mitochondrial intermembrane space"/>
    <property type="evidence" value="ECO:0000314"/>
    <property type="project" value="UniProtKB"/>
</dbReference>
<dbReference type="GO" id="GO:0031966">
    <property type="term" value="C:mitochondrial membrane"/>
    <property type="evidence" value="ECO:0000314"/>
    <property type="project" value="UniProtKB"/>
</dbReference>
<dbReference type="GO" id="GO:0005739">
    <property type="term" value="C:mitochondrion"/>
    <property type="evidence" value="ECO:0000314"/>
    <property type="project" value="HPA"/>
</dbReference>
<dbReference type="GO" id="GO:1990246">
    <property type="term" value="C:uniplex complex"/>
    <property type="evidence" value="ECO:0000314"/>
    <property type="project" value="UniProtKB"/>
</dbReference>
<dbReference type="GO" id="GO:0019855">
    <property type="term" value="F:calcium channel inhibitor activity"/>
    <property type="evidence" value="ECO:0000314"/>
    <property type="project" value="UniProtKB"/>
</dbReference>
<dbReference type="GO" id="GO:0005246">
    <property type="term" value="F:calcium channel regulator activity"/>
    <property type="evidence" value="ECO:0000314"/>
    <property type="project" value="UniProt"/>
</dbReference>
<dbReference type="GO" id="GO:0005509">
    <property type="term" value="F:calcium ion binding"/>
    <property type="evidence" value="ECO:0000314"/>
    <property type="project" value="UniProtKB"/>
</dbReference>
<dbReference type="GO" id="GO:0061891">
    <property type="term" value="F:calcium ion sensor activity"/>
    <property type="evidence" value="ECO:0000314"/>
    <property type="project" value="UniProtKB"/>
</dbReference>
<dbReference type="GO" id="GO:0042802">
    <property type="term" value="F:identical protein binding"/>
    <property type="evidence" value="ECO:0000353"/>
    <property type="project" value="IntAct"/>
</dbReference>
<dbReference type="GO" id="GO:0046982">
    <property type="term" value="F:protein heterodimerization activity"/>
    <property type="evidence" value="ECO:0000353"/>
    <property type="project" value="UniProtKB"/>
</dbReference>
<dbReference type="GO" id="GO:0036444">
    <property type="term" value="P:calcium import into the mitochondrion"/>
    <property type="evidence" value="ECO:0000314"/>
    <property type="project" value="UniProtKB"/>
</dbReference>
<dbReference type="GO" id="GO:0070509">
    <property type="term" value="P:calcium ion import"/>
    <property type="evidence" value="ECO:0000314"/>
    <property type="project" value="UniProtKB"/>
</dbReference>
<dbReference type="GO" id="GO:0071277">
    <property type="term" value="P:cellular response to calcium ion"/>
    <property type="evidence" value="ECO:0000314"/>
    <property type="project" value="UniProt"/>
</dbReference>
<dbReference type="GO" id="GO:0072732">
    <property type="term" value="P:cellular response to calcium ion starvation"/>
    <property type="evidence" value="ECO:0000314"/>
    <property type="project" value="UniProt"/>
</dbReference>
<dbReference type="GO" id="GO:0006952">
    <property type="term" value="P:defense response"/>
    <property type="evidence" value="ECO:0000304"/>
    <property type="project" value="ProtInc"/>
</dbReference>
<dbReference type="GO" id="GO:0051560">
    <property type="term" value="P:mitochondrial calcium ion homeostasis"/>
    <property type="evidence" value="ECO:0000314"/>
    <property type="project" value="ComplexPortal"/>
</dbReference>
<dbReference type="GO" id="GO:0006851">
    <property type="term" value="P:mitochondrial calcium ion transmembrane transport"/>
    <property type="evidence" value="ECO:0000314"/>
    <property type="project" value="UniProtKB"/>
</dbReference>
<dbReference type="GO" id="GO:1903852">
    <property type="term" value="P:positive regulation of cristae formation"/>
    <property type="evidence" value="ECO:0000314"/>
    <property type="project" value="UniProtKB"/>
</dbReference>
<dbReference type="GO" id="GO:0051561">
    <property type="term" value="P:positive regulation of mitochondrial calcium ion concentration"/>
    <property type="evidence" value="ECO:0000314"/>
    <property type="project" value="UniProtKB"/>
</dbReference>
<dbReference type="GO" id="GO:0051260">
    <property type="term" value="P:protein homooligomerization"/>
    <property type="evidence" value="ECO:0000314"/>
    <property type="project" value="UniProtKB"/>
</dbReference>
<dbReference type="GO" id="GO:1900069">
    <property type="term" value="P:regulation of cellular hyperosmotic salinity response"/>
    <property type="evidence" value="ECO:0000315"/>
    <property type="project" value="UniProtKB"/>
</dbReference>
<dbReference type="CDD" id="cd16173">
    <property type="entry name" value="EFh_MICU1"/>
    <property type="match status" value="1"/>
</dbReference>
<dbReference type="FunFam" id="1.10.238.10:FF:000088">
    <property type="entry name" value="Calcium uptake protein 1, mitochondrial"/>
    <property type="match status" value="1"/>
</dbReference>
<dbReference type="FunFam" id="1.10.238.10:FF:000159">
    <property type="entry name" value="Calcium uptake protein 1, mitochondrial"/>
    <property type="match status" value="1"/>
</dbReference>
<dbReference type="Gene3D" id="1.10.238.10">
    <property type="entry name" value="EF-hand"/>
    <property type="match status" value="2"/>
</dbReference>
<dbReference type="InterPro" id="IPR011992">
    <property type="entry name" value="EF-hand-dom_pair"/>
</dbReference>
<dbReference type="InterPro" id="IPR018247">
    <property type="entry name" value="EF_Hand_1_Ca_BS"/>
</dbReference>
<dbReference type="InterPro" id="IPR002048">
    <property type="entry name" value="EF_hand_dom"/>
</dbReference>
<dbReference type="InterPro" id="IPR039800">
    <property type="entry name" value="MICU1/2/3"/>
</dbReference>
<dbReference type="PANTHER" id="PTHR12294:SF1">
    <property type="entry name" value="CALCIUM UPTAKE PROTEIN 1, MITOCHONDRIAL"/>
    <property type="match status" value="1"/>
</dbReference>
<dbReference type="PANTHER" id="PTHR12294">
    <property type="entry name" value="EF HAND DOMAIN FAMILY A1,A2-RELATED"/>
    <property type="match status" value="1"/>
</dbReference>
<dbReference type="Pfam" id="PF13202">
    <property type="entry name" value="EF-hand_5"/>
    <property type="match status" value="1"/>
</dbReference>
<dbReference type="Pfam" id="PF13833">
    <property type="entry name" value="EF-hand_8"/>
    <property type="match status" value="1"/>
</dbReference>
<dbReference type="SMART" id="SM00054">
    <property type="entry name" value="EFh"/>
    <property type="match status" value="2"/>
</dbReference>
<dbReference type="SUPFAM" id="SSF47473">
    <property type="entry name" value="EF-hand"/>
    <property type="match status" value="2"/>
</dbReference>
<dbReference type="PROSITE" id="PS00018">
    <property type="entry name" value="EF_HAND_1"/>
    <property type="match status" value="2"/>
</dbReference>
<dbReference type="PROSITE" id="PS50222">
    <property type="entry name" value="EF_HAND_2"/>
    <property type="match status" value="2"/>
</dbReference>
<accession>Q9BPX6</accession>
<accession>A0A0U1RRK1</accession>
<accession>A8MV96</accession>
<accession>B3KN20</accession>
<accession>B4DJH9</accession>
<accession>B4DPI1</accession>
<accession>B5MBY3</accession>
<accession>D3YTJ3</accession>
<accession>O75785</accession>
<accession>Q9H9N6</accession>
<accession>Q9UFX0</accession>
<evidence type="ECO:0000250" key="1">
    <source>
        <dbReference type="UniProtKB" id="Q8VCX5"/>
    </source>
</evidence>
<evidence type="ECO:0000255" key="2"/>
<evidence type="ECO:0000255" key="3">
    <source>
        <dbReference type="PROSITE-ProRule" id="PRU00448"/>
    </source>
</evidence>
<evidence type="ECO:0000256" key="4">
    <source>
        <dbReference type="SAM" id="MobiDB-lite"/>
    </source>
</evidence>
<evidence type="ECO:0000269" key="5">
    <source>
    </source>
</evidence>
<evidence type="ECO:0000269" key="6">
    <source>
    </source>
</evidence>
<evidence type="ECO:0000269" key="7">
    <source>
    </source>
</evidence>
<evidence type="ECO:0000269" key="8">
    <source>
    </source>
</evidence>
<evidence type="ECO:0000269" key="9">
    <source>
    </source>
</evidence>
<evidence type="ECO:0000269" key="10">
    <source>
    </source>
</evidence>
<evidence type="ECO:0000269" key="11">
    <source>
    </source>
</evidence>
<evidence type="ECO:0000269" key="12">
    <source>
    </source>
</evidence>
<evidence type="ECO:0000269" key="13">
    <source>
    </source>
</evidence>
<evidence type="ECO:0000269" key="14">
    <source>
    </source>
</evidence>
<evidence type="ECO:0000269" key="15">
    <source>
    </source>
</evidence>
<evidence type="ECO:0000269" key="16">
    <source>
    </source>
</evidence>
<evidence type="ECO:0000269" key="17">
    <source>
    </source>
</evidence>
<evidence type="ECO:0000269" key="18">
    <source>
    </source>
</evidence>
<evidence type="ECO:0000269" key="19">
    <source>
    </source>
</evidence>
<evidence type="ECO:0000269" key="20">
    <source>
    </source>
</evidence>
<evidence type="ECO:0000269" key="21">
    <source>
    </source>
</evidence>
<evidence type="ECO:0000269" key="22">
    <source>
    </source>
</evidence>
<evidence type="ECO:0000269" key="23">
    <source>
    </source>
</evidence>
<evidence type="ECO:0000269" key="24">
    <source>
    </source>
</evidence>
<evidence type="ECO:0000269" key="25">
    <source>
    </source>
</evidence>
<evidence type="ECO:0000269" key="26">
    <source>
    </source>
</evidence>
<evidence type="ECO:0000269" key="27">
    <source>
    </source>
</evidence>
<evidence type="ECO:0000269" key="28">
    <source>
    </source>
</evidence>
<evidence type="ECO:0000269" key="29">
    <source>
    </source>
</evidence>
<evidence type="ECO:0000269" key="30">
    <source>
    </source>
</evidence>
<evidence type="ECO:0000269" key="31">
    <source>
    </source>
</evidence>
<evidence type="ECO:0000269" key="32">
    <source>
    </source>
</evidence>
<evidence type="ECO:0000269" key="33">
    <source>
    </source>
</evidence>
<evidence type="ECO:0000269" key="34">
    <source>
    </source>
</evidence>
<evidence type="ECO:0000269" key="35">
    <source>
    </source>
</evidence>
<evidence type="ECO:0000269" key="36">
    <source>
    </source>
</evidence>
<evidence type="ECO:0000269" key="37">
    <source>
    </source>
</evidence>
<evidence type="ECO:0000269" key="38">
    <source>
    </source>
</evidence>
<evidence type="ECO:0000269" key="39">
    <source>
    </source>
</evidence>
<evidence type="ECO:0000269" key="40">
    <source>
    </source>
</evidence>
<evidence type="ECO:0000269" key="41">
    <source>
    </source>
</evidence>
<evidence type="ECO:0000269" key="42">
    <source>
    </source>
</evidence>
<evidence type="ECO:0000269" key="43">
    <source>
    </source>
</evidence>
<evidence type="ECO:0000269" key="44">
    <source>
    </source>
</evidence>
<evidence type="ECO:0000269" key="45">
    <source>
    </source>
</evidence>
<evidence type="ECO:0000269" key="46">
    <source>
    </source>
</evidence>
<evidence type="ECO:0000269" key="47">
    <source>
    </source>
</evidence>
<evidence type="ECO:0000269" key="48">
    <source>
    </source>
</evidence>
<evidence type="ECO:0000269" key="49">
    <source>
    </source>
</evidence>
<evidence type="ECO:0000303" key="50">
    <source>
    </source>
</evidence>
<evidence type="ECO:0000303" key="51">
    <source>
    </source>
</evidence>
<evidence type="ECO:0000303" key="52">
    <source>
    </source>
</evidence>
<evidence type="ECO:0000303" key="53">
    <source>
    </source>
</evidence>
<evidence type="ECO:0000303" key="54">
    <source>
    </source>
</evidence>
<evidence type="ECO:0000305" key="55"/>
<evidence type="ECO:0000305" key="56">
    <source>
    </source>
</evidence>
<evidence type="ECO:0000312" key="57">
    <source>
        <dbReference type="HGNC" id="HGNC:1530"/>
    </source>
</evidence>
<evidence type="ECO:0007744" key="58">
    <source>
        <dbReference type="PDB" id="6K7Y"/>
    </source>
</evidence>
<evidence type="ECO:0007744" key="59">
    <source>
        <dbReference type="PDB" id="6LB7"/>
    </source>
</evidence>
<evidence type="ECO:0007744" key="60">
    <source>
        <dbReference type="PDB" id="6LB8"/>
    </source>
</evidence>
<evidence type="ECO:0007744" key="61">
    <source>
        <dbReference type="PDB" id="6LE5"/>
    </source>
</evidence>
<evidence type="ECO:0007744" key="62">
    <source>
        <dbReference type="PDB" id="6WDN"/>
    </source>
</evidence>
<evidence type="ECO:0007744" key="63">
    <source>
        <dbReference type="PDB" id="6WDO"/>
    </source>
</evidence>
<evidence type="ECO:0007744" key="64">
    <source>
        <dbReference type="PDB" id="6XJV"/>
    </source>
</evidence>
<evidence type="ECO:0007744" key="65">
    <source>
        <dbReference type="PDB" id="6XJX"/>
    </source>
</evidence>
<evidence type="ECO:0007744" key="66">
    <source>
        <dbReference type="PDB" id="6XQN"/>
    </source>
</evidence>
<evidence type="ECO:0007829" key="67">
    <source>
        <dbReference type="PDB" id="4NSC"/>
    </source>
</evidence>
<evidence type="ECO:0007829" key="68">
    <source>
        <dbReference type="PDB" id="4NSD"/>
    </source>
</evidence>
<evidence type="ECO:0007829" key="69">
    <source>
        <dbReference type="PDB" id="6LB7"/>
    </source>
</evidence>
<evidence type="ECO:0007829" key="70">
    <source>
        <dbReference type="PDB" id="6LB8"/>
    </source>
</evidence>
<evidence type="ECO:0007829" key="71">
    <source>
        <dbReference type="PDB" id="6LE5"/>
    </source>
</evidence>
<evidence type="ECO:0007829" key="72">
    <source>
        <dbReference type="PDB" id="6WDN"/>
    </source>
</evidence>
<evidence type="ECO:0007829" key="73">
    <source>
        <dbReference type="PDB" id="6XQN"/>
    </source>
</evidence>
<keyword id="KW-0002">3D-structure</keyword>
<keyword id="KW-0020">Allergen</keyword>
<keyword id="KW-0025">Alternative splicing</keyword>
<keyword id="KW-0106">Calcium</keyword>
<keyword id="KW-0109">Calcium transport</keyword>
<keyword id="KW-0225">Disease variant</keyword>
<keyword id="KW-1015">Disulfide bond</keyword>
<keyword id="KW-0406">Ion transport</keyword>
<keyword id="KW-0472">Membrane</keyword>
<keyword id="KW-0479">Metal-binding</keyword>
<keyword id="KW-0488">Methylation</keyword>
<keyword id="KW-0496">Mitochondrion</keyword>
<keyword id="KW-0999">Mitochondrion inner membrane</keyword>
<keyword id="KW-0597">Phosphoprotein</keyword>
<keyword id="KW-1267">Proteomics identification</keyword>
<keyword id="KW-1185">Reference proteome</keyword>
<keyword id="KW-0677">Repeat</keyword>
<keyword id="KW-0809">Transit peptide</keyword>
<keyword id="KW-0813">Transport</keyword>
<protein>
    <recommendedName>
        <fullName evidence="55">Calcium uptake protein 1, mitochondrial</fullName>
    </recommendedName>
    <alternativeName>
        <fullName evidence="52">Atopy-related autoantigen CALC</fullName>
        <shortName evidence="52">ara CALC</shortName>
    </alternativeName>
    <alternativeName>
        <fullName evidence="52">Calcium-binding atopy-related autoantigen 1</fullName>
    </alternativeName>
    <allergenName evidence="52">Hom s 4</allergenName>
</protein>
<name>MICU1_HUMAN</name>
<sequence>MFRLNSLSALAELAVGSRWYHGGSQPIQIRRRLMMVAFLGASAVTASTGLLWKRAHAESPPCVDNLKSDIGDKGKNKDEGDVCNHEKKTADLAPHPEEKKKKRSGFRDRKVMEYENRIRAYSTPDKIFRYFATLKVISEPGEAEVFMTPEDFVRSITPNEKQPEHLGLDQYIIKRFDGKKISQEREKFADEGSIFYTLGECGLISFSDYIFLTTVLSTPQRNFEIAFKMFDLNGDGEVDMEEFEQVQSIIRSQTSMGMRHRDRPTTGNTLKSGLCSALTTYFFGADLKGKLTIKNFLEFQRKLQHDVLKLEFERHDPVDGRITERQFGGMLLAYSGVQSKKLTAMQRQLKKHFKEGKGLTFQEVENFFTFLKNINDVDTALSFYHMAGASLDKVTMQQVARTVAKVELSDHVCDVVFALFDCDGNGELSNKEFVSIMKQRLMRGLEKPKDMGFTRLMQAMWKCAQETAWDFALPKQ</sequence>
<comment type="function">
    <text evidence="5 6 8 9 11 13 14 17 19 20 23 24 27 28 29 30 31 33 34 36 37 38 39 43 44 45 46 47 48">Calcium sensor of the mitochondrial calcium uniporter (MCU) channel, which senses calcium level via its EF-hand domains (PubMed:20693986, PubMed:23101630, PubMed:23747253, PubMed:24313810, PubMed:24332854, PubMed:24503055, PubMed:24560927, PubMed:26341627, PubMed:26903221, PubMed:27099988, PubMed:28615291, PubMed:30454562, PubMed:30638448, PubMed:32494073, PubMed:32667285, PubMed:32762847, PubMed:32790952, PubMed:34463251, PubMed:36206740, PubMed:37036971, PubMed:37126688). MICU1 and MICU2 (or MICU3) form a disulfide-linked heterodimer that stimulates and inhibits MCU activity, depending on the concentration of calcium (PubMed:24560927, PubMed:26903221, PubMed:28615291, PubMed:32148862, PubMed:32494073, PubMed:32667285, PubMed:32762847, PubMed:32790952, PubMed:36206740, PubMed:37036971, PubMed:37126688). At low calcium levels, MICU1 occludes the pore of the MCU channel, preventing mitochondrial calcium uptake (PubMed:32494073, PubMed:32667285, PubMed:32762847, PubMed:37036971, PubMed:37126688). At higher calcium levels, calcium-binding to MICU1 and MICU2 (or MICU3) induces a conformational change that weakens MCU-MICU1 interactions and moves the MICU1-MICU2 heterodimer away from the pore, allowing calcium permeation through the MCU channel (PubMed:32494073, PubMed:32667285, PubMed:32762847). Also required to protect against manganese toxicity by preventing manganese uptake by MCU: mechanistically, manganese-binding to its EF-hand domains does not induce any conformational change, maintaining MCU pore occlusion (PubMed:30082385, PubMed:30403999). Also acts as a barrier for inhibitors of the MCU channel, such as ruthenium red or its derivative Ru360 (PubMed:37244260). Acts as a regulator of mitochondrial cristae structure independently of its ability to regulate the mitochondrial calcium uniporter channel (PubMed:31427612, PubMed:37098122). Regulates glucose-dependent insulin secretion in pancreatic beta-cells by regulating mitochondrial calcium uptake (PubMed:22904319). Induces T-helper 1-mediated autoreactivity, which is accompanied by the release of IFNG (PubMed:16002733).</text>
</comment>
<comment type="function">
    <molecule>Isoform 6</molecule>
    <text evidence="1">Isoform that regulates mitochondrial calcium uniporter (MCU) in the skeletal muscle (By similarity). Compared to other isoforms, this isoform has higher affinity for calcium, promoting mitochondrial calcium uptake at lower calcium concentrations (By similarity). This allows a rapid response of mitochondrial metabolism and ensures sustained ATP production needed for resistance and strenuous exercise (By similarity).</text>
</comment>
<comment type="activity regulation">
    <text evidence="48">Activated by spermine, kaempferol and SB202190, which bind MICU1 and prevent MCU pore occlusion in absence of calcium.</text>
</comment>
<comment type="subunit">
    <text evidence="7 9 10 12 14 16 19 20 21 24 26 27 30 31 32 34 36 37 38 39 40 44 45 46 47">Heterodimer; disulfide-linked; heterodimerizes with MICU2 or MICU3 (PubMed:24560927, PubMed:28615291, PubMed:31397067, PubMed:32148862, PubMed:32494073, PubMed:32790952). Homodimer; disulfide-linked (PubMed:36206740). Component of the uniplex complex, composed of MCU, EMRE/SMDT1, MICU1 and MICU2 (or MICU3) in a 4:4:1:1 stoichiometry (PubMed:21685886, PubMed:23101630, PubMed:23178883, PubMed:24231807, PubMed:24332854, PubMed:26341627, PubMed:26387864, PubMed:27099988, PubMed:32494073, PubMed:32667285, PubMed:32762847, PubMed:32862359). The composition of calcium sensors within the uniplex complex can differ depending on tissues: a MICU1 homodimer can be present instead of the MICU1-MICU2 heterodimer in skeletal-muscle and kidney (PubMed:36206740). MICU1 is recruited to the uniplex complex by EMRE/SMDT1, and it associates with MCU at low calcium levels, occluding the pore of the MCU channel (PubMed:30454562, PubMed:30638448, PubMed:32494073, PubMed:37036971, PubMed:37126688). Associates with the MICOS complex (PubMed:37098122). Interacts with SLC25A23 (PubMed:24430870). Interacts with CHCHD4/MIA40; which introduces the interchain disulfide bond with MICU2 (PubMed:26387864). Interacts (when methylated) with UCP2; leading to decrease the calcium sensitivity of MICU1 (PubMed:27642082).</text>
</comment>
<comment type="interaction">
    <interactant intactId="EBI-2371996">
        <id>Q9BPX6</id>
    </interactant>
    <interactant intactId="EBI-2562213">
        <id>Q8N4Q1</id>
        <label>CHCHD4</label>
    </interactant>
    <organismsDiffer>false</organismsDiffer>
    <experiments>6</experiments>
</comment>
<comment type="interaction">
    <interactant intactId="EBI-2371996">
        <id>Q9BPX6</id>
    </interactant>
    <interactant intactId="EBI-6552124">
        <id>Q8NE86</id>
        <label>MCU</label>
    </interactant>
    <organismsDiffer>false</organismsDiffer>
    <experiments>7</experiments>
</comment>
<comment type="interaction">
    <interactant intactId="EBI-2371996">
        <id>Q9BPX6</id>
    </interactant>
    <interactant intactId="EBI-15932889">
        <id>Q8NE86-1</id>
        <label>MCU</label>
    </interactant>
    <organismsDiffer>false</organismsDiffer>
    <experiments>2</experiments>
</comment>
<comment type="interaction">
    <interactant intactId="EBI-2371996">
        <id>Q9BPX6</id>
    </interactant>
    <interactant intactId="EBI-2371996">
        <id>Q9BPX6</id>
        <label>MICU1</label>
    </interactant>
    <organismsDiffer>false</organismsDiffer>
    <experiments>8</experiments>
</comment>
<comment type="interaction">
    <interactant intactId="EBI-2371996">
        <id>Q9BPX6</id>
    </interactant>
    <interactant intactId="EBI-3197790">
        <id>Q8IYU8</id>
        <label>MICU2</label>
    </interactant>
    <organismsDiffer>false</organismsDiffer>
    <experiments>8</experiments>
</comment>
<comment type="interaction">
    <interactant intactId="EBI-5456336">
        <id>Q9BPX6-1</id>
    </interactant>
    <interactant intactId="EBI-15932889">
        <id>Q8NE86-1</id>
        <label>MCU</label>
    </interactant>
    <organismsDiffer>false</organismsDiffer>
    <experiments>2</experiments>
</comment>
<comment type="subcellular location">
    <subcellularLocation>
        <location evidence="11 19 21">Mitochondrion intermembrane space</location>
    </subcellularLocation>
    <subcellularLocation>
        <location evidence="11 12 21 24 27">Mitochondrion inner membrane</location>
    </subcellularLocation>
    <text evidence="30 33">Recruited to the mitochondrial inner membrane by EMRE/SMDT1 (PubMed:30454562). Also localizes to mitochondrial cristae junctions (PubMed:31427612).</text>
</comment>
<comment type="subcellular location">
    <molecule>Isoform 6</molecule>
    <subcellularLocation>
        <location evidence="1">Mitochondrion intermembrane space</location>
    </subcellularLocation>
    <subcellularLocation>
        <location evidence="1">Mitochondrion inner membrane</location>
    </subcellularLocation>
</comment>
<comment type="alternative products">
    <event type="alternative splicing"/>
    <isoform>
        <id>Q9BPX6-1</id>
        <name>1</name>
        <sequence type="displayed"/>
    </isoform>
    <isoform>
        <id>Q9BPX6-2</id>
        <name>2</name>
        <sequence type="described" ref="VSP_031980 VSP_031981"/>
    </isoform>
    <isoform>
        <id>Q9BPX6-3</id>
        <name>3</name>
        <sequence type="described" ref="VSP_031979"/>
    </isoform>
    <isoform>
        <id>Q9BPX6-4</id>
        <name>4</name>
        <sequence type="described" ref="VSP_039890 VSP_039891"/>
    </isoform>
    <isoform>
        <id>Q9BPX6-5</id>
        <name>5</name>
        <sequence type="described" ref="VSP_039890 VSP_039892"/>
    </isoform>
    <isoform>
        <id>Q9BPX6-6</id>
        <name>6</name>
        <name evidence="54">MICU1.1</name>
        <sequence type="described" ref="VSP_062348"/>
    </isoform>
</comment>
<comment type="tissue specificity">
    <text evidence="5 49">Expressed in epithelial cell lines. Strongly expressed in epidermal keratinocytes and dermal endothelial cells.</text>
</comment>
<comment type="domain">
    <text evidence="9 19">The EF-hand domains have high affinity for calcium and act as sensors of calcium levels (PubMed:23101630, PubMed:24560927).</text>
</comment>
<comment type="domain">
    <text evidence="24 39">The polybasic region mediates interaction with EMRE/SMDT1 and association with the uniplex complex.</text>
</comment>
<comment type="domain">
    <text evidence="36">Lysine and arginine residues in the K/R-ring mediate electrostatic interactions with MCU and play a key role in MCU inhibition in absence of calcium.</text>
</comment>
<comment type="domain">
    <text evidence="17 18">The C-helix plays a key role in mitochondrial calcium uptake, probably by mediating interaction with MICU2 (PubMed:24503055, PubMed:24514027).</text>
</comment>
<comment type="PTM">
    <text evidence="1">Phosphorylation at Ser-122 by AKT1 impairs its maturation and stability.</text>
</comment>
<comment type="PTM">
    <text evidence="26">Asymmetric dimethylation at Arg-455 by PRMT1 decreases the calcium sensitivity of MICU1 by promoting interaction with UCP2.</text>
</comment>
<comment type="PTM">
    <text evidence="44">Degraded by YME1L1 when not complexed as homodimer or heterodimer (PubMed:36206740). Not degraded when complexed as homodimer or heterodimer; the presence of the interchain disulfide bond protecting MICU1 from degradation by YME1L1 (PubMed:36206740).</text>
</comment>
<comment type="disease" evidence="15 35 41 42">
    <disease id="DI-04058">
        <name>Myopathy with extrapyramidal signs</name>
        <acronym>MPXPS</acronym>
        <description>An autosomal recessive disorder characterized by early-onset proximal muscle weakness with a static course and moderately to grossly elevated serum creatine kinase levels accompanied by learning difficulties. Most patients develop subtle extrapyramidal motor signs that progress to a debilitating disorder of involuntary movement with variable features, including chorea, tremor, dystonic posturing and orofacial dyskinesia. Additional variable features include ataxia, microcephaly, ophthalmoplegia, ptosis, optic atrophy and axonal peripheral neuropathy.</description>
        <dbReference type="MIM" id="615673"/>
    </disease>
    <text evidence="15">The disease is caused by variants affecting the gene represented in this entry. The complex phenotype is due to alterations in mitochondrial calcium signaling characterized by increased mitochondrial Ca(2+) load (PubMed:24336167).</text>
</comment>
<comment type="disease">
    <text evidence="25">An homozygous partial MICU1 deletion is responsible for a disorder manifesting in childhood with fatigue, lethargy and muscle weakness. The disease is caused by variants affecting the gene represented in this entry.</text>
</comment>
<comment type="allergen">
    <text evidence="49">Causes an allergic reaction in human. Binds to IgE from atopic dermatitis (AD) patients. Identified as an IgE autoantigen in atopic dermatitis (AD) patients with severe skin manifestations.</text>
</comment>
<comment type="similarity">
    <text evidence="55">Belongs to the MICU1 family. MICU1 subfamily.</text>
</comment>
<comment type="caution">
    <text evidence="11 21 22 36 37 40">The topology was subject to discussion (PubMed:23747253, PubMed:26387864, PubMed:26489515). According to a publication, forms an intramembrane hairpin loop without crossing the membrane (PubMed:23747253). Other studies suggested that it contains a transmembrane region that crosses the mitochondrial inner membrane, with the main part of the protein localized in the mitochondrial intermembrane space (PubMed:26387864, PubMed:26489515). 3D structures of the uniplex complex however showed that MICU1 does not contain any transmembrane or intramembrane hairpin loop and localizes at the outer surface of the mitochondrion inner membrane in the intermembrane space (PubMed:32494073, PubMed:32667285, PubMed:32862359).</text>
</comment>
<comment type="caution">
    <text evidence="43 45 47">According to a report, MICU1 does not occlude MCU at low calcium levels and instead acts by potentiating the activity of MCU (PubMed:34463251). However, other reports confirmed the ability of MICU2 to occlude the MCU pore at low calcium levels (PubMed:37036971, PubMed:37126688).</text>
</comment>
<comment type="sequence caution" evidence="55">
    <conflict type="erroneous initiation">
        <sequence resource="EMBL-CDS" id="BAB14187"/>
    </conflict>
    <text>Truncated N-terminus.</text>
</comment>
<comment type="sequence caution" evidence="55">
    <conflict type="miscellaneous discrepancy">
        <sequence resource="EMBL-CDS" id="CAA76830"/>
    </conflict>
    <text>Contaminating sequence. Sequence of unknown origin in the N-terminal part.</text>
</comment>
<gene>
    <name evidence="53 57" type="primary">MICU1</name>
    <name evidence="52" type="synonym">CALC</name>
    <name evidence="52" type="synonym">CBARA1</name>
</gene>
<proteinExistence type="evidence at protein level"/>
<feature type="transit peptide" description="Mitochondrion" evidence="2 56">
    <location>
        <begin position="1"/>
        <end position="33"/>
    </location>
</feature>
<feature type="chain" id="PRO_0000322990" description="Calcium uptake protein 1, mitochondrial">
    <location>
        <begin position="34"/>
        <end position="476"/>
    </location>
</feature>
<feature type="domain" description="EF-hand 1" evidence="3">
    <location>
        <begin position="218"/>
        <end position="253"/>
    </location>
</feature>
<feature type="domain" description="EF-hand 2" evidence="3">
    <location>
        <begin position="408"/>
        <end position="443"/>
    </location>
</feature>
<feature type="region of interest" description="Disordered" evidence="4">
    <location>
        <begin position="68"/>
        <end position="106"/>
    </location>
</feature>
<feature type="region of interest" description="Polybasic region" evidence="24">
    <location>
        <begin position="99"/>
        <end position="110"/>
    </location>
</feature>
<feature type="region of interest" description="K/R-ring" evidence="36">
    <location>
        <begin position="126"/>
        <end position="129"/>
    </location>
</feature>
<feature type="region of interest" description="K/R-ring" evidence="36">
    <location>
        <begin position="259"/>
        <end position="263"/>
    </location>
</feature>
<feature type="region of interest" description="C-helix region" evidence="18">
    <location>
        <begin position="455"/>
        <end position="465"/>
    </location>
</feature>
<feature type="binding site" evidence="3 18">
    <location>
        <position position="231"/>
    </location>
    <ligand>
        <name>Ca(2+)</name>
        <dbReference type="ChEBI" id="CHEBI:29108"/>
        <label>1</label>
    </ligand>
</feature>
<feature type="binding site" evidence="3 18">
    <location>
        <position position="233"/>
    </location>
    <ligand>
        <name>Ca(2+)</name>
        <dbReference type="ChEBI" id="CHEBI:29108"/>
        <label>1</label>
    </ligand>
</feature>
<feature type="binding site" evidence="3 18">
    <location>
        <position position="235"/>
    </location>
    <ligand>
        <name>Ca(2+)</name>
        <dbReference type="ChEBI" id="CHEBI:29108"/>
        <label>1</label>
    </ligand>
</feature>
<feature type="binding site" evidence="3 18">
    <location>
        <position position="237"/>
    </location>
    <ligand>
        <name>Ca(2+)</name>
        <dbReference type="ChEBI" id="CHEBI:29108"/>
        <label>1</label>
    </ligand>
</feature>
<feature type="binding site" evidence="3 18">
    <location>
        <position position="242"/>
    </location>
    <ligand>
        <name>Ca(2+)</name>
        <dbReference type="ChEBI" id="CHEBI:29108"/>
        <label>1</label>
    </ligand>
</feature>
<feature type="binding site" evidence="3 18 39 59">
    <location>
        <position position="421"/>
    </location>
    <ligand>
        <name>Ca(2+)</name>
        <dbReference type="ChEBI" id="CHEBI:29108"/>
        <label>2</label>
    </ligand>
</feature>
<feature type="binding site" evidence="3 18 39 59">
    <location>
        <position position="423"/>
    </location>
    <ligand>
        <name>Ca(2+)</name>
        <dbReference type="ChEBI" id="CHEBI:29108"/>
        <label>2</label>
    </ligand>
</feature>
<feature type="binding site" evidence="3 18 39 59">
    <location>
        <position position="425"/>
    </location>
    <ligand>
        <name>Ca(2+)</name>
        <dbReference type="ChEBI" id="CHEBI:29108"/>
        <label>2</label>
    </ligand>
</feature>
<feature type="binding site" evidence="3 18 39 59">
    <location>
        <position position="427"/>
    </location>
    <ligand>
        <name>Ca(2+)</name>
        <dbReference type="ChEBI" id="CHEBI:29108"/>
        <label>2</label>
    </ligand>
</feature>
<feature type="binding site" evidence="3 18 39 59">
    <location>
        <position position="432"/>
    </location>
    <ligand>
        <name>Ca(2+)</name>
        <dbReference type="ChEBI" id="CHEBI:29108"/>
        <label>2</label>
    </ligand>
</feature>
<feature type="modified residue" description="Phosphoserine" evidence="1">
    <location>
        <position position="122"/>
    </location>
</feature>
<feature type="modified residue" description="Asymmetric dimethylarginine" evidence="26">
    <location>
        <position position="455"/>
    </location>
</feature>
<feature type="disulfide bond" description="Interchain (with C-413 in MICU2)" evidence="36 44 56 62">
    <location>
        <position position="463"/>
    </location>
</feature>
<feature type="splice variant" id="VSP_039890" description="In isoform 4 and isoform 5." evidence="51">
    <location>
        <begin position="1"/>
        <end position="198"/>
    </location>
</feature>
<feature type="splice variant" id="VSP_031979" description="In isoform 3." evidence="50">
    <original>K</original>
    <variation>KTE</variation>
    <location>
        <position position="179"/>
    </location>
</feature>
<feature type="splice variant" id="VSP_062348" description="In isoform 6.">
    <original>K</original>
    <variation>KDFWQ</variation>
    <location>
        <position position="179"/>
    </location>
</feature>
<feature type="splice variant" id="VSP_039891" description="In isoform 4." evidence="51">
    <original>GECGLISFSDYIFLTTVLST</original>
    <variation>MKRIYTYRRAKEIFKDTPKA</variation>
    <location>
        <begin position="199"/>
        <end position="218"/>
    </location>
</feature>
<feature type="splice variant" id="VSP_039892" description="In isoform 5." evidence="51">
    <original>GECGLISFSDYIFLTTVLST</original>
    <variation>MVSLKAKLNHLRQSMLKQKA</variation>
    <location>
        <begin position="199"/>
        <end position="218"/>
    </location>
</feature>
<feature type="splice variant" id="VSP_031980" description="In isoform 2." evidence="51">
    <original>VTMQQVARTV</original>
    <variation>GKGTIFMGRR</variation>
    <location>
        <begin position="394"/>
        <end position="403"/>
    </location>
</feature>
<feature type="splice variant" id="VSP_031981" description="In isoform 2." evidence="51">
    <location>
        <begin position="404"/>
        <end position="476"/>
    </location>
</feature>
<feature type="sequence variant" id="VAR_089211" description="In MPXPS." evidence="41">
    <location>
        <begin position="18"/>
        <end position="476"/>
    </location>
</feature>
<feature type="sequence variant" id="VAR_089212" description="In MPXPS." evidence="42">
    <location>
        <begin position="129"/>
        <end position="476"/>
    </location>
</feature>
<feature type="sequence variant" id="VAR_089213" description="In MPXPS; uncertain significance; dbSNP:rs375664373." evidence="35">
    <original>R</original>
    <variation>P</variation>
    <location>
        <position position="129"/>
    </location>
</feature>
<feature type="sequence variant" id="VAR_089214" description="In MPXPS." evidence="41">
    <location>
        <position position="185"/>
    </location>
</feature>
<feature type="mutagenesis site" description="Abolishes interaction with EMRE/SMDT1." evidence="30 39">
    <original>KKKKR</original>
    <variation>AAAAA</variation>
    <location>
        <begin position="99"/>
        <end position="103"/>
    </location>
</feature>
<feature type="mutagenesis site" description="Abolishes interaction with EMRE/SMDT1 while maintaining interaction with MICU2." evidence="24">
    <original>KKKK</original>
    <variation>EQEQ</variation>
    <location>
        <begin position="99"/>
        <end position="102"/>
    </location>
</feature>
<feature type="mutagenesis site" description="Slightly decreased ability to inhibit MCU channel activity in absence of calcium." evidence="37">
    <original>F</original>
    <variation>A</variation>
    <location>
        <position position="106"/>
    </location>
</feature>
<feature type="mutagenesis site" description="Decreased ability to inhibit MCU channel activity in absence of calcium." evidence="36">
    <original>Y</original>
    <variation>A</variation>
    <location>
        <position position="114"/>
    </location>
</feature>
<feature type="mutagenesis site" description="Slightly decreased ability to inhibit MCU channel activity in absence of calcium." evidence="37">
    <original>R</original>
    <variation>A</variation>
    <location>
        <position position="117"/>
    </location>
</feature>
<feature type="mutagenesis site" description="Impaired interaction with MCU." evidence="31">
    <original>R</original>
    <variation>E</variation>
    <location>
        <position position="119"/>
    </location>
</feature>
<feature type="mutagenesis site" description="Does not affect interaction with MCU." evidence="31">
    <original>R</original>
    <variation>K</variation>
    <location>
        <position position="119"/>
    </location>
</feature>
<feature type="mutagenesis site" description="Decreased ability to inhibit MCU channel activity in absence of calcium." evidence="36 37">
    <original>Y</original>
    <variation>A</variation>
    <location>
        <position position="121"/>
    </location>
</feature>
<feature type="mutagenesis site" description="Abolished ability to inhibit MCU channel activity in absence of calcium; when associated with 259-E--E-263." evidence="36">
    <location>
        <begin position="126"/>
        <end position="129"/>
    </location>
</feature>
<feature type="mutagenesis site" description="Abolished ability to inhibit MCU channel activity in absence of calcium." evidence="37">
    <original>K</original>
    <variation>A</variation>
    <location>
        <position position="126"/>
    </location>
</feature>
<feature type="mutagenesis site" description="Abolished ability to inhibit MCU in absence of calcium." evidence="45">
    <original>K</original>
    <variation>E</variation>
    <location>
        <position position="126"/>
    </location>
</feature>
<feature type="mutagenesis site" description="Decreased ability to inhibit MCU channel activity in absence of calcium." evidence="37">
    <original>R</original>
    <variation>A</variation>
    <location>
        <position position="129"/>
    </location>
</feature>
<feature type="mutagenesis site" description="Does not affect interaction with MCU." evidence="31">
    <original>R</original>
    <variation>K</variation>
    <location>
        <position position="154"/>
    </location>
</feature>
<feature type="mutagenesis site" description="Impaired interaction with MCU." evidence="31">
    <original>R</original>
    <variation>Q</variation>
    <location>
        <position position="154"/>
    </location>
</feature>
<feature type="mutagenesis site" description="Abolishes homooligomerization." evidence="18">
    <original>R</original>
    <variation>A</variation>
    <location>
        <position position="221"/>
    </location>
</feature>
<feature type="mutagenesis site" description="Abolishes mitochondrial Ca(2+) uptake; when associated with A-242; A-421 and A-432." evidence="6 9 17 45 47">
    <original>D</original>
    <variation>A</variation>
    <location>
        <position position="231"/>
    </location>
</feature>
<feature type="mutagenesis site" description="Abolishes mitochondrial Ca(2+) uptake; when associated with A-231; A-421 and A-432." evidence="6 9 17 45 47">
    <original>E</original>
    <variation>A</variation>
    <variation>K</variation>
    <location>
        <position position="242"/>
    </location>
</feature>
<feature type="mutagenesis site" description="Does not affect interaction with MICU2 in presence of calcium; decreased interaction with MICU2 in absence of calcium." evidence="39">
    <original>Q</original>
    <variation>A</variation>
    <location>
        <position position="253"/>
    </location>
</feature>
<feature type="mutagenesis site" description="Abolished ability to inhibit MCU channel activity in absence of calcium; when associated with 126-E--E-129." evidence="36">
    <original>RHRDR</original>
    <variation>EHEDE</variation>
    <location>
        <begin position="259"/>
        <end position="263"/>
    </location>
</feature>
<feature type="mutagenesis site" description="Abolishes homooligomerization." evidence="18">
    <original>D</original>
    <variation>A</variation>
    <location>
        <position position="376"/>
    </location>
</feature>
<feature type="mutagenesis site" description="Abolishes homooligomerization." evidence="18">
    <original>FYH</original>
    <variation>AYA</variation>
    <location>
        <begin position="383"/>
        <end position="385"/>
    </location>
</feature>
<feature type="mutagenesis site" description="Abolished interaction with MICU2." evidence="32">
    <original>F</original>
    <variation>A</variation>
    <location>
        <position position="383"/>
    </location>
</feature>
<feature type="mutagenesis site" description="Does not affect interaction with MICU2 in absence or presence of calcium." evidence="39">
    <original>Q</original>
    <variation>A</variation>
    <location>
        <position position="398"/>
    </location>
</feature>
<feature type="mutagenesis site" description="Abolishes mitochondrial Ca(2+) uptake; when associated with A-231; A-242 and A-432." evidence="6 9 17 45 47">
    <original>D</original>
    <variation>A</variation>
    <location>
        <position position="421"/>
    </location>
</feature>
<feature type="mutagenesis site" description="Does not affect interaction with MICU2 in presence of calcium; decreased interaction with MICU2 in absence of calcium." evidence="39">
    <original>E</original>
    <variation>A</variation>
    <location>
        <position position="427"/>
    </location>
</feature>
<feature type="mutagenesis site" description="Abolishes mitochondrial Ca(2+) uptake; when associated with A-231; A-242 and A-421." evidence="6 9 17 45 47">
    <original>E</original>
    <variation>A</variation>
    <location>
        <position position="432"/>
    </location>
</feature>
<feature type="mutagenesis site" description="Loss of function; when associated with A-421." evidence="6 9 17">
    <original>E</original>
    <variation>K</variation>
    <location>
        <position position="432"/>
    </location>
</feature>
<feature type="mutagenesis site" description="Decreased interaction with MCU." evidence="30">
    <original>RLMRGL</original>
    <variation>AQALMA</variation>
    <location>
        <begin position="440"/>
        <end position="445"/>
    </location>
</feature>
<feature type="mutagenesis site" description="Abolished methylation by PRMT1." evidence="26">
    <original>R</original>
    <variation>R</variation>
    <variation>F</variation>
    <location>
        <position position="455"/>
    </location>
</feature>
<feature type="mutagenesis site" description="Abolishes interchain disulfide bond and heterodimer formation with MICU2." evidence="21">
    <original>C</original>
    <variation>A</variation>
    <location>
        <position position="463"/>
    </location>
</feature>
<feature type="mutagenesis site" description="Increased degradation by YME1L1." evidence="44">
    <original>C</original>
    <variation>R</variation>
    <location>
        <position position="463"/>
    </location>
</feature>
<feature type="sequence conflict" description="In Ref. 2; CAB55915." evidence="55" ref="2">
    <original>R</original>
    <variation>G</variation>
    <location>
        <position position="54"/>
    </location>
</feature>
<feature type="sequence conflict" description="In Ref. 1; BAG60593." evidence="55" ref="1">
    <original>K</original>
    <variation>E</variation>
    <location>
        <position position="449"/>
    </location>
</feature>
<feature type="helix" evidence="69">
    <location>
        <begin position="105"/>
        <end position="109"/>
    </location>
</feature>
<feature type="helix" evidence="69">
    <location>
        <begin position="111"/>
        <end position="121"/>
    </location>
</feature>
<feature type="helix" evidence="69">
    <location>
        <begin position="124"/>
        <end position="131"/>
    </location>
</feature>
<feature type="strand" evidence="69">
    <location>
        <begin position="134"/>
        <end position="138"/>
    </location>
</feature>
<feature type="strand" evidence="69">
    <location>
        <begin position="141"/>
        <end position="147"/>
    </location>
</feature>
<feature type="helix" evidence="69">
    <location>
        <begin position="149"/>
        <end position="155"/>
    </location>
</feature>
<feature type="strand" evidence="71">
    <location>
        <begin position="157"/>
        <end position="159"/>
    </location>
</feature>
<feature type="turn" evidence="67">
    <location>
        <begin position="164"/>
        <end position="166"/>
    </location>
</feature>
<feature type="strand" evidence="73">
    <location>
        <begin position="167"/>
        <end position="169"/>
    </location>
</feature>
<feature type="strand" evidence="69">
    <location>
        <begin position="172"/>
        <end position="174"/>
    </location>
</feature>
<feature type="strand" evidence="72">
    <location>
        <begin position="191"/>
        <end position="193"/>
    </location>
</feature>
<feature type="helix" evidence="69">
    <location>
        <begin position="194"/>
        <end position="198"/>
    </location>
</feature>
<feature type="strand" evidence="71">
    <location>
        <begin position="199"/>
        <end position="202"/>
    </location>
</feature>
<feature type="helix" evidence="69">
    <location>
        <begin position="206"/>
        <end position="217"/>
    </location>
</feature>
<feature type="helix" evidence="69">
    <location>
        <begin position="220"/>
        <end position="230"/>
    </location>
</feature>
<feature type="strand" evidence="69">
    <location>
        <begin position="231"/>
        <end position="238"/>
    </location>
</feature>
<feature type="helix" evidence="69">
    <location>
        <begin position="240"/>
        <end position="253"/>
    </location>
</feature>
<feature type="turn" evidence="67">
    <location>
        <begin position="255"/>
        <end position="257"/>
    </location>
</feature>
<feature type="helix" evidence="72">
    <location>
        <begin position="264"/>
        <end position="266"/>
    </location>
</feature>
<feature type="helix" evidence="69">
    <location>
        <begin position="277"/>
        <end position="283"/>
    </location>
</feature>
<feature type="turn" evidence="68">
    <location>
        <begin position="284"/>
        <end position="286"/>
    </location>
</feature>
<feature type="strand" evidence="70">
    <location>
        <begin position="290"/>
        <end position="292"/>
    </location>
</feature>
<feature type="helix" evidence="69">
    <location>
        <begin position="293"/>
        <end position="314"/>
    </location>
</feature>
<feature type="helix" evidence="69">
    <location>
        <begin position="324"/>
        <end position="335"/>
    </location>
</feature>
<feature type="helix" evidence="69">
    <location>
        <begin position="340"/>
        <end position="352"/>
    </location>
</feature>
<feature type="turn" evidence="69">
    <location>
        <begin position="353"/>
        <end position="355"/>
    </location>
</feature>
<feature type="helix" evidence="69">
    <location>
        <begin position="361"/>
        <end position="372"/>
    </location>
</feature>
<feature type="helix" evidence="69">
    <location>
        <begin position="374"/>
        <end position="380"/>
    </location>
</feature>
<feature type="helix" evidence="69">
    <location>
        <begin position="382"/>
        <end position="386"/>
    </location>
</feature>
<feature type="helix" evidence="69">
    <location>
        <begin position="393"/>
        <end position="403"/>
    </location>
</feature>
<feature type="helix" evidence="69">
    <location>
        <begin position="410"/>
        <end position="420"/>
    </location>
</feature>
<feature type="strand" evidence="69">
    <location>
        <begin position="425"/>
        <end position="428"/>
    </location>
</feature>
<feature type="turn" evidence="69">
    <location>
        <begin position="430"/>
        <end position="433"/>
    </location>
</feature>
<feature type="helix" evidence="69">
    <location>
        <begin position="434"/>
        <end position="438"/>
    </location>
</feature>
<feature type="helix" evidence="67">
    <location>
        <begin position="455"/>
        <end position="464"/>
    </location>
</feature>